<proteinExistence type="evidence at protein level"/>
<gene>
    <name type="primary">MYC</name>
    <name type="synonym">BHLHE39</name>
</gene>
<feature type="chain" id="PRO_0000127293" description="Myc proto-oncogene protein">
    <location>
        <begin position="1"/>
        <end position="454"/>
    </location>
</feature>
<feature type="domain" description="bHLH" evidence="2">
    <location>
        <begin position="369"/>
        <end position="421"/>
    </location>
</feature>
<feature type="region of interest" description="Disordered" evidence="3">
    <location>
        <begin position="219"/>
        <end position="310"/>
    </location>
</feature>
<feature type="region of interest" description="Basic motif" evidence="2">
    <location>
        <begin position="369"/>
        <end position="382"/>
    </location>
</feature>
<feature type="region of interest" description="Helix-loop-helix motif" evidence="2">
    <location>
        <begin position="383"/>
        <end position="421"/>
    </location>
</feature>
<feature type="region of interest" description="Leucine-zipper">
    <location>
        <begin position="428"/>
        <end position="449"/>
    </location>
</feature>
<feature type="short sequence motif" description="9aaTAD" evidence="31">
    <location>
        <begin position="115"/>
        <end position="123"/>
    </location>
</feature>
<feature type="short sequence motif" description="UBR5-degron" evidence="32">
    <location>
        <begin position="370"/>
        <end position="379"/>
    </location>
</feature>
<feature type="compositionally biased region" description="Low complexity" evidence="3">
    <location>
        <begin position="222"/>
        <end position="252"/>
    </location>
</feature>
<feature type="compositionally biased region" description="Acidic residues" evidence="3">
    <location>
        <begin position="266"/>
        <end position="278"/>
    </location>
</feature>
<feature type="compositionally biased region" description="Basic and acidic residues" evidence="3">
    <location>
        <begin position="281"/>
        <end position="293"/>
    </location>
</feature>
<feature type="modified residue" description="Phosphoserine" evidence="47 49">
    <location>
        <position position="21"/>
    </location>
</feature>
<feature type="modified residue" description="Phosphothreonine; by RAF; in vitro" evidence="38">
    <location>
        <position position="23"/>
    </location>
</feature>
<feature type="modified residue" description="Phosphothreonine; by GSK3; alternate" evidence="4 11 29 37 44 45 48 49">
    <location>
        <position position="73"/>
    </location>
</feature>
<feature type="modified residue" description="Phosphoserine; by DYRK2, GSK3 and CDK2" evidence="4 11 15 19 21 24 26 29 37 45 48 49">
    <location>
        <position position="77"/>
    </location>
</feature>
<feature type="modified residue" description="Phosphoserine" evidence="29 45 49">
    <location>
        <position position="86"/>
    </location>
</feature>
<feature type="modified residue" description="Phosphoserine" evidence="29">
    <location>
        <position position="96"/>
    </location>
</feature>
<feature type="modified residue" description="N6-acetyllysine; by PCAF; alternate" evidence="8">
    <location>
        <position position="158"/>
    </location>
</feature>
<feature type="modified residue" description="N6-acetyllysine; alternate" evidence="46">
    <location>
        <position position="163"/>
    </location>
</feature>
<feature type="modified residue" description="Phosphoserine" evidence="29">
    <location>
        <position position="166"/>
    </location>
</feature>
<feature type="modified residue" description="N6-acetyllysine; by PCAF" evidence="8">
    <location>
        <position position="172"/>
    </location>
</feature>
<feature type="modified residue" description="Phosphoserine" evidence="29">
    <location>
        <position position="174"/>
    </location>
</feature>
<feature type="modified residue" description="Phosphoserine" evidence="29 47">
    <location>
        <position position="176"/>
    </location>
</feature>
<feature type="modified residue" description="N6-acetyllysine; by PCAF" evidence="8">
    <location>
        <position position="290"/>
    </location>
</feature>
<feature type="modified residue" description="Phosphoserine" evidence="49">
    <location>
        <position position="308"/>
    </location>
</feature>
<feature type="modified residue" description="Phosphoserine" evidence="29">
    <location>
        <position position="329"/>
    </location>
</feature>
<feature type="modified residue" description="Phosphothreonine" evidence="29">
    <location>
        <position position="330"/>
    </location>
</feature>
<feature type="modified residue" description="N6-acetyllysine; by PCAF" evidence="8">
    <location>
        <position position="332"/>
    </location>
</feature>
<feature type="modified residue" description="N6-acetyllysine; by PCAF" evidence="8">
    <location>
        <position position="338"/>
    </location>
</feature>
<feature type="modified residue" description="Phosphoserine; by PIM2; in vitro" evidence="1">
    <location>
        <position position="344"/>
    </location>
</feature>
<feature type="modified residue" description="Phosphoserine" evidence="29">
    <location>
        <position position="359"/>
    </location>
</feature>
<feature type="modified residue" description="Phosphoserine" evidence="29">
    <location>
        <position position="362"/>
    </location>
</feature>
<feature type="modified residue" description="Phosphoserine" evidence="29">
    <location>
        <position position="363"/>
    </location>
</feature>
<feature type="modified residue" description="N6-acetyllysine; by PCAF" evidence="8">
    <location>
        <position position="386"/>
    </location>
</feature>
<feature type="glycosylation site" id="CAR_000033" description="O-linked (GlcNAc) threonine; alternate" evidence="35">
    <location>
        <position position="73"/>
    </location>
</feature>
<feature type="cross-link" description="Glycyl lysine isopeptide (Lys-Gly) (interchain with G-Cter in SUMO2)" evidence="50">
    <location>
        <position position="67"/>
    </location>
</feature>
<feature type="cross-link" description="Glycyl lysine isopeptide (Lys-Gly) (interchain with G-Cter in SUMO2); alternate" evidence="50">
    <location>
        <position position="158"/>
    </location>
</feature>
<feature type="cross-link" description="Glycyl lysine isopeptide (Lys-Gly) (interchain with G-Cter in SUMO2); alternate" evidence="50">
    <location>
        <position position="163"/>
    </location>
</feature>
<feature type="cross-link" description="Glycyl lysine isopeptide (Lys-Gly) (interchain with G-Cter in SUMO2)" evidence="50">
    <location>
        <position position="313"/>
    </location>
</feature>
<feature type="splice variant" id="VSP_061778" description="In isoform 1.">
    <location>
        <begin position="1"/>
        <end position="15"/>
    </location>
</feature>
<feature type="splice variant" id="VSP_061779" description="In isoform 3.">
    <original>QQ</original>
    <variation>Q</variation>
    <location>
        <begin position="10"/>
        <end position="11"/>
    </location>
</feature>
<feature type="sequence variant" id="VAR_016327" description="In dbSNP:rs4645959." evidence="40">
    <original>N</original>
    <variation>S</variation>
    <location>
        <position position="26"/>
    </location>
</feature>
<feature type="sequence variant" id="VAR_063384" description="In a Burkitt lymphoma sample; dbSNP:rs121918684." evidence="34 36">
    <original>E</original>
    <variation>D</variation>
    <location>
        <position position="54"/>
    </location>
</feature>
<feature type="sequence variant" id="VAR_063385" description="In a Burkitt lymphoma sample; dbSNP:rs28933407." evidence="36">
    <original>P</original>
    <variation>S</variation>
    <location>
        <position position="72"/>
    </location>
</feature>
<feature type="sequence variant" id="VAR_063386" description="In a Burkitt lymphoma sample; dbSNP:rs121918685." evidence="36">
    <original>P</original>
    <variation>A</variation>
    <location>
        <position position="74"/>
    </location>
</feature>
<feature type="sequence variant" id="VAR_063387" description="In a Burkitt lymphoma sample; dbSNP:rs121918683." evidence="36">
    <original>N</original>
    <variation>T</variation>
    <location>
        <position position="101"/>
    </location>
</feature>
<feature type="sequence variant" id="VAR_016328" description="In dbSNP:rs4645960." evidence="40">
    <original>G</original>
    <variation>C</variation>
    <location>
        <position position="175"/>
    </location>
</feature>
<feature type="sequence variant" id="VAR_016329" description="In dbSNP:rs4645961." evidence="40">
    <original>V</original>
    <variation>I</variation>
    <location>
        <position position="185"/>
    </location>
</feature>
<feature type="sequence variant" id="VAR_016330" description="In dbSNP:rs4645968." evidence="40">
    <original>A</original>
    <variation>V</variation>
    <location>
        <position position="337"/>
    </location>
</feature>
<feature type="mutagenesis site" description="Impairs interaction with FBXW7 and subsequent degradation by the proteasome. Normal inhibition of Ras-induced senescence." evidence="4 11 15 19">
    <original>T</original>
    <variation>A</variation>
    <location>
        <position position="73"/>
    </location>
</feature>
<feature type="mutagenesis site" description="Impairs interaction with FBXW7 and subsequent degradation by the proteasome. Impaired inhibition of Ras-induced senescence. Abolishes phosphorylation by DYRK2, and subsequent phosphorylation by GSK3B at Thr-73." evidence="4 11 15 19 21">
    <original>S</original>
    <variation>A</variation>
    <location>
        <position position="77"/>
    </location>
</feature>
<feature type="mutagenesis site" description="Phospho-mimetic mutant; abolished regulation by AMBRA1." evidence="24">
    <original>S</original>
    <variation>D</variation>
    <location>
        <position position="77"/>
    </location>
</feature>
<feature type="mutagenesis site" description="Abolished ubiquitination and degradation by the DCX(TRPC4AP) complex." evidence="28">
    <original>R</original>
    <variation>K</variation>
    <location>
        <position position="450"/>
    </location>
</feature>
<feature type="sequence conflict" description="In Ref. 9; BAA01374." evidence="42" ref="9">
    <original>D</original>
    <variation>N</variation>
    <location>
        <position position="2"/>
    </location>
</feature>
<feature type="sequence conflict" description="In Ref. 9; BAA01374." evidence="42" ref="9">
    <original>V</original>
    <variation>E</variation>
    <location>
        <position position="6"/>
    </location>
</feature>
<feature type="sequence conflict" description="In Ref. 5; no nucleotide entry." evidence="42" ref="5">
    <original>SF</original>
    <variation>TI</variation>
    <location>
        <begin position="21"/>
        <end position="22"/>
    </location>
</feature>
<feature type="sequence conflict" description="In Ref. 5; no nucleotide entry." evidence="42" ref="5">
    <original>R</original>
    <variation>K</variation>
    <location>
        <position position="25"/>
    </location>
</feature>
<feature type="sequence conflict" description="In Ref. 5; no nucleotide entry." evidence="42" ref="5">
    <original>L</original>
    <variation>LL</variation>
    <location>
        <position position="71"/>
    </location>
</feature>
<feature type="sequence conflict" description="In Ref. 7; CAA25288." evidence="42" ref="7">
    <original>S</original>
    <variation>P</variation>
    <location>
        <position position="77"/>
    </location>
</feature>
<feature type="sequence conflict" description="In Ref. 5; no nucleotide entry." evidence="42" ref="5">
    <original>G</original>
    <variation>D</variation>
    <location>
        <position position="103"/>
    </location>
</feature>
<feature type="sequence conflict" description="In Ref. 5; no nucleotide entry." evidence="42" ref="5">
    <original>S</original>
    <variation>N</variation>
    <location>
        <position position="107"/>
    </location>
</feature>
<feature type="sequence conflict" description="In Ref. 5; no nucleotide entry." evidence="42" ref="5">
    <original>S</original>
    <variation>N</variation>
    <location>
        <position position="129"/>
    </location>
</feature>
<feature type="sequence conflict" description="In Ref. 5; no nucleotide entry." evidence="42" ref="5">
    <original>D</original>
    <variation>G</variation>
    <location>
        <position position="135"/>
    </location>
</feature>
<feature type="sequence conflict" description="In Ref. 5; no nucleotide entry." evidence="42" ref="5">
    <original>C</original>
    <variation>S</variation>
    <location>
        <position position="186"/>
    </location>
</feature>
<feature type="sequence conflict" description="In Ref. 5; no nucleotide entry." evidence="42" ref="5">
    <original>S</original>
    <variation>R</variation>
    <location>
        <position position="218"/>
    </location>
</feature>
<feature type="sequence conflict" description="In Ref. 5; no nucleotide entry." evidence="42" ref="5">
    <original>S</original>
    <variation>A</variation>
    <location>
        <position position="245"/>
    </location>
</feature>
<feature type="sequence conflict" description="In Ref. 5; no nucleotide entry." evidence="42" ref="5">
    <original>L</original>
    <variation>F</variation>
    <location>
        <position position="255"/>
    </location>
</feature>
<feature type="sequence conflict" description="In Ref. 5; no nucleotide entry." evidence="42" ref="5">
    <original>P</original>
    <variation>S</variation>
    <location>
        <position position="260"/>
    </location>
</feature>
<feature type="helix" evidence="51">
    <location>
        <begin position="113"/>
        <end position="118"/>
    </location>
</feature>
<feature type="helix" evidence="51">
    <location>
        <begin position="119"/>
        <end position="121"/>
    </location>
</feature>
<feature type="helix" evidence="52">
    <location>
        <begin position="366"/>
        <end position="393"/>
    </location>
</feature>
<feature type="helix" evidence="52">
    <location>
        <begin position="397"/>
        <end position="399"/>
    </location>
</feature>
<feature type="helix" evidence="52">
    <location>
        <begin position="407"/>
        <end position="450"/>
    </location>
</feature>
<reference key="1">
    <citation type="journal article" date="1983" name="Cell">
        <title>The human c-myc oncogene: structural consequences of translocation into the IgH locus in Burkitt lymphoma.</title>
        <authorList>
            <person name="Battey J."/>
            <person name="Moulding C."/>
            <person name="Taub R."/>
            <person name="Murphy W."/>
            <person name="Stewart T."/>
            <person name="Potter H."/>
            <person name="Lenoir G."/>
            <person name="Leder P."/>
        </authorList>
    </citation>
    <scope>NUCLEOTIDE SEQUENCE [GENOMIC DNA]</scope>
</reference>
<reference key="2">
    <citation type="journal article" date="1983" name="EMBO J.">
        <title>Sequence of the murine and human cellular myc oncogenes and two modes of myc transcription resulting from chromosome translocation in B lymphoid tumours.</title>
        <authorList>
            <person name="Bernard O."/>
            <person name="Cory S."/>
            <person name="Gerondakis S."/>
            <person name="Webb E."/>
            <person name="Adams J.M."/>
        </authorList>
    </citation>
    <scope>NUCLEOTIDE SEQUENCE [GENOMIC DNA]</scope>
</reference>
<reference key="3">
    <citation type="journal article" date="1983" name="Nature">
        <title>Identification and nucleotide sequence of a human locus homologous to the v-myc oncogene of avian myelocytomatosis virus MC29.</title>
        <authorList>
            <person name="Colby W.W."/>
            <person name="Chen E.Y."/>
            <person name="Smith D.H."/>
            <person name="Levinson A.D."/>
        </authorList>
    </citation>
    <scope>NUCLEOTIDE SEQUENCE [GENOMIC DNA]</scope>
</reference>
<reference key="4">
    <citation type="journal article" date="1983" name="Nature">
        <title>Nucleotide sequence of cloned cDNA of human c-myc oncogene.</title>
        <authorList>
            <person name="Watt R."/>
            <person name="Stanton L.W."/>
            <person name="Marcu K.B."/>
            <person name="Gallo R.C."/>
            <person name="Croce C.M."/>
            <person name="Rovera G."/>
        </authorList>
    </citation>
    <scope>NUCLEOTIDE SEQUENCE [MRNA] (ISOFORM 1)</scope>
</reference>
<reference key="5">
    <citation type="journal article" date="1983" name="Nature">
        <title>Altered nucleotide sequences of a translocated c-myc gene in Burkitt lymphoma.</title>
        <authorList>
            <person name="Rabbitts T.H."/>
            <person name="Hamlyn P.H."/>
            <person name="Baer R."/>
        </authorList>
    </citation>
    <scope>NUCLEOTIDE SEQUENCE [MRNA] (ISOFORM 1)</scope>
    <scope>VARIANT ASP-54</scope>
</reference>
<reference key="6">
    <citation type="journal article" date="1983" name="Proc. Natl. Acad. Sci. U.S.A.">
        <title>Nucleotide sequence analysis of human c-myc locus, chicken homologue, and myelocytomatosis virus MC29 transforming gene reveals a highly conserved gene product.</title>
        <authorList>
            <person name="Watson D.K."/>
            <person name="Psallidopoulos M.C."/>
            <person name="Samuel K.P."/>
            <person name="Dalla-Favera R."/>
            <person name="Papas T.S."/>
        </authorList>
    </citation>
    <scope>NUCLEOTIDE SEQUENCE [GENOMIC DNA]</scope>
</reference>
<reference key="7">
    <citation type="journal article" date="1984" name="Nature">
        <title>Effect of somatic mutation within translocated c-myc genes in Burkitt's lymphoma.</title>
        <authorList>
            <person name="Rabbitts T.H."/>
            <person name="Forster A."/>
            <person name="Hamlyn P."/>
            <person name="Baer R."/>
        </authorList>
    </citation>
    <scope>NUCLEOTIDE SEQUENCE [MRNA] (ISOFORM 1)</scope>
    <scope>NUCLEOTIDE SEQUENCE [GENOMIC DNA] OF 16-267</scope>
</reference>
<reference key="8">
    <citation type="journal article" date="1984" name="EMBO J.">
        <title>Nucleotide sequence of the human c-myc locus: provocative open reading frame within the first exon.</title>
        <authorList>
            <person name="Gazin C."/>
            <person name="Dupont S."/>
            <person name="de Dinechin D."/>
            <person name="Hampe A."/>
            <person name="Masson J.-M."/>
            <person name="Martin P."/>
            <person name="Stehelin D."/>
            <person name="Galibert F."/>
        </authorList>
    </citation>
    <scope>NUCLEOTIDE SEQUENCE [GENOMIC DNA]</scope>
</reference>
<reference key="9">
    <citation type="journal article" date="1993" name="Gene">
        <title>Allele-specific activation of the c-myc gene in an atypical Burkitt's lymphoma carrying the t(2;8) chromosomal translocation 250 kb downstream from c-myc.</title>
        <authorList>
            <person name="Tachibana K."/>
            <person name="Takayama N."/>
            <person name="Matsuo K."/>
            <person name="Kato S."/>
            <person name="Yamamoto K."/>
            <person name="Ohyama K."/>
            <person name="Umezawa A."/>
            <person name="Takano T."/>
        </authorList>
    </citation>
    <scope>NUCLEOTIDE SEQUENCE [GENOMIC DNA]</scope>
</reference>
<reference key="10">
    <citation type="submission" date="2003-05" db="EMBL/GenBank/DDBJ databases">
        <title>Cloning of human full-length CDSs in BD Creator(TM) system donor vector.</title>
        <authorList>
            <person name="Kalnine N."/>
            <person name="Chen X."/>
            <person name="Rolfs A."/>
            <person name="Halleck A."/>
            <person name="Hines L."/>
            <person name="Eisenstein S."/>
            <person name="Koundinya M."/>
            <person name="Raphael J."/>
            <person name="Moreira D."/>
            <person name="Kelley T."/>
            <person name="LaBaer J."/>
            <person name="Lin Y."/>
            <person name="Phelan M."/>
            <person name="Farmer A."/>
        </authorList>
    </citation>
    <scope>NUCLEOTIDE SEQUENCE [LARGE SCALE MRNA] (ISOFORM 1)</scope>
</reference>
<reference key="11">
    <citation type="submission" date="2003-01" db="EMBL/GenBank/DDBJ databases">
        <authorList>
            <consortium name="NIEHS SNPs program"/>
        </authorList>
    </citation>
    <scope>NUCLEOTIDE SEQUENCE [GENOMIC DNA]</scope>
    <scope>VARIANTS SER-26; CYS-175; ILE-185 AND VAL-337</scope>
</reference>
<reference key="12">
    <citation type="journal article" date="2004" name="Nat. Genet.">
        <title>Complete sequencing and characterization of 21,243 full-length human cDNAs.</title>
        <authorList>
            <person name="Ota T."/>
            <person name="Suzuki Y."/>
            <person name="Nishikawa T."/>
            <person name="Otsuki T."/>
            <person name="Sugiyama T."/>
            <person name="Irie R."/>
            <person name="Wakamatsu A."/>
            <person name="Hayashi K."/>
            <person name="Sato H."/>
            <person name="Nagai K."/>
            <person name="Kimura K."/>
            <person name="Makita H."/>
            <person name="Sekine M."/>
            <person name="Obayashi M."/>
            <person name="Nishi T."/>
            <person name="Shibahara T."/>
            <person name="Tanaka T."/>
            <person name="Ishii S."/>
            <person name="Yamamoto J."/>
            <person name="Saito K."/>
            <person name="Kawai Y."/>
            <person name="Isono Y."/>
            <person name="Nakamura Y."/>
            <person name="Nagahari K."/>
            <person name="Murakami K."/>
            <person name="Yasuda T."/>
            <person name="Iwayanagi T."/>
            <person name="Wagatsuma M."/>
            <person name="Shiratori A."/>
            <person name="Sudo H."/>
            <person name="Hosoiri T."/>
            <person name="Kaku Y."/>
            <person name="Kodaira H."/>
            <person name="Kondo H."/>
            <person name="Sugawara M."/>
            <person name="Takahashi M."/>
            <person name="Kanda K."/>
            <person name="Yokoi T."/>
            <person name="Furuya T."/>
            <person name="Kikkawa E."/>
            <person name="Omura Y."/>
            <person name="Abe K."/>
            <person name="Kamihara K."/>
            <person name="Katsuta N."/>
            <person name="Sato K."/>
            <person name="Tanikawa M."/>
            <person name="Yamazaki M."/>
            <person name="Ninomiya K."/>
            <person name="Ishibashi T."/>
            <person name="Yamashita H."/>
            <person name="Murakawa K."/>
            <person name="Fujimori K."/>
            <person name="Tanai H."/>
            <person name="Kimata M."/>
            <person name="Watanabe M."/>
            <person name="Hiraoka S."/>
            <person name="Chiba Y."/>
            <person name="Ishida S."/>
            <person name="Ono Y."/>
            <person name="Takiguchi S."/>
            <person name="Watanabe S."/>
            <person name="Yosida M."/>
            <person name="Hotuta T."/>
            <person name="Kusano J."/>
            <person name="Kanehori K."/>
            <person name="Takahashi-Fujii A."/>
            <person name="Hara H."/>
            <person name="Tanase T.-O."/>
            <person name="Nomura Y."/>
            <person name="Togiya S."/>
            <person name="Komai F."/>
            <person name="Hara R."/>
            <person name="Takeuchi K."/>
            <person name="Arita M."/>
            <person name="Imose N."/>
            <person name="Musashino K."/>
            <person name="Yuuki H."/>
            <person name="Oshima A."/>
            <person name="Sasaki N."/>
            <person name="Aotsuka S."/>
            <person name="Yoshikawa Y."/>
            <person name="Matsunawa H."/>
            <person name="Ichihara T."/>
            <person name="Shiohata N."/>
            <person name="Sano S."/>
            <person name="Moriya S."/>
            <person name="Momiyama H."/>
            <person name="Satoh N."/>
            <person name="Takami S."/>
            <person name="Terashima Y."/>
            <person name="Suzuki O."/>
            <person name="Nakagawa S."/>
            <person name="Senoh A."/>
            <person name="Mizoguchi H."/>
            <person name="Goto Y."/>
            <person name="Shimizu F."/>
            <person name="Wakebe H."/>
            <person name="Hishigaki H."/>
            <person name="Watanabe T."/>
            <person name="Sugiyama A."/>
            <person name="Takemoto M."/>
            <person name="Kawakami B."/>
            <person name="Yamazaki M."/>
            <person name="Watanabe K."/>
            <person name="Kumagai A."/>
            <person name="Itakura S."/>
            <person name="Fukuzumi Y."/>
            <person name="Fujimori Y."/>
            <person name="Komiyama M."/>
            <person name="Tashiro H."/>
            <person name="Tanigami A."/>
            <person name="Fujiwara T."/>
            <person name="Ono T."/>
            <person name="Yamada K."/>
            <person name="Fujii Y."/>
            <person name="Ozaki K."/>
            <person name="Hirao M."/>
            <person name="Ohmori Y."/>
            <person name="Kawabata A."/>
            <person name="Hikiji T."/>
            <person name="Kobatake N."/>
            <person name="Inagaki H."/>
            <person name="Ikema Y."/>
            <person name="Okamoto S."/>
            <person name="Okitani R."/>
            <person name="Kawakami T."/>
            <person name="Noguchi S."/>
            <person name="Itoh T."/>
            <person name="Shigeta K."/>
            <person name="Senba T."/>
            <person name="Matsumura K."/>
            <person name="Nakajima Y."/>
            <person name="Mizuno T."/>
            <person name="Morinaga M."/>
            <person name="Sasaki M."/>
            <person name="Togashi T."/>
            <person name="Oyama M."/>
            <person name="Hata H."/>
            <person name="Watanabe M."/>
            <person name="Komatsu T."/>
            <person name="Mizushima-Sugano J."/>
            <person name="Satoh T."/>
            <person name="Shirai Y."/>
            <person name="Takahashi Y."/>
            <person name="Nakagawa K."/>
            <person name="Okumura K."/>
            <person name="Nagase T."/>
            <person name="Nomura N."/>
            <person name="Kikuchi H."/>
            <person name="Masuho Y."/>
            <person name="Yamashita R."/>
            <person name="Nakai K."/>
            <person name="Yada T."/>
            <person name="Nakamura Y."/>
            <person name="Ohara O."/>
            <person name="Isogai T."/>
            <person name="Sugano S."/>
        </authorList>
    </citation>
    <scope>NUCLEOTIDE SEQUENCE [LARGE SCALE MRNA] (ISOFORM 1)</scope>
    <source>
        <tissue>Uterus</tissue>
    </source>
</reference>
<reference key="13">
    <citation type="journal article" date="2006" name="Nature">
        <title>DNA sequence and analysis of human chromosome 8.</title>
        <authorList>
            <person name="Nusbaum C."/>
            <person name="Mikkelsen T.S."/>
            <person name="Zody M.C."/>
            <person name="Asakawa S."/>
            <person name="Taudien S."/>
            <person name="Garber M."/>
            <person name="Kodira C.D."/>
            <person name="Schueler M.G."/>
            <person name="Shimizu A."/>
            <person name="Whittaker C.A."/>
            <person name="Chang J.L."/>
            <person name="Cuomo C.A."/>
            <person name="Dewar K."/>
            <person name="FitzGerald M.G."/>
            <person name="Yang X."/>
            <person name="Allen N.R."/>
            <person name="Anderson S."/>
            <person name="Asakawa T."/>
            <person name="Blechschmidt K."/>
            <person name="Bloom T."/>
            <person name="Borowsky M.L."/>
            <person name="Butler J."/>
            <person name="Cook A."/>
            <person name="Corum B."/>
            <person name="DeArellano K."/>
            <person name="DeCaprio D."/>
            <person name="Dooley K.T."/>
            <person name="Dorris L. III"/>
            <person name="Engels R."/>
            <person name="Gloeckner G."/>
            <person name="Hafez N."/>
            <person name="Hagopian D.S."/>
            <person name="Hall J.L."/>
            <person name="Ishikawa S.K."/>
            <person name="Jaffe D.B."/>
            <person name="Kamat A."/>
            <person name="Kudoh J."/>
            <person name="Lehmann R."/>
            <person name="Lokitsang T."/>
            <person name="Macdonald P."/>
            <person name="Major J.E."/>
            <person name="Matthews C.D."/>
            <person name="Mauceli E."/>
            <person name="Menzel U."/>
            <person name="Mihalev A.H."/>
            <person name="Minoshima S."/>
            <person name="Murayama Y."/>
            <person name="Naylor J.W."/>
            <person name="Nicol R."/>
            <person name="Nguyen C."/>
            <person name="O'Leary S.B."/>
            <person name="O'Neill K."/>
            <person name="Parker S.C.J."/>
            <person name="Polley A."/>
            <person name="Raymond C.K."/>
            <person name="Reichwald K."/>
            <person name="Rodriguez J."/>
            <person name="Sasaki T."/>
            <person name="Schilhabel M."/>
            <person name="Siddiqui R."/>
            <person name="Smith C.L."/>
            <person name="Sneddon T.P."/>
            <person name="Talamas J.A."/>
            <person name="Tenzin P."/>
            <person name="Topham K."/>
            <person name="Venkataraman V."/>
            <person name="Wen G."/>
            <person name="Yamazaki S."/>
            <person name="Young S.K."/>
            <person name="Zeng Q."/>
            <person name="Zimmer A.R."/>
            <person name="Rosenthal A."/>
            <person name="Birren B.W."/>
            <person name="Platzer M."/>
            <person name="Shimizu N."/>
            <person name="Lander E.S."/>
        </authorList>
    </citation>
    <scope>NUCLEOTIDE SEQUENCE [LARGE SCALE GENOMIC DNA]</scope>
</reference>
<reference key="14">
    <citation type="submission" date="2005-07" db="EMBL/GenBank/DDBJ databases">
        <authorList>
            <person name="Mural R.J."/>
            <person name="Istrail S."/>
            <person name="Sutton G.G."/>
            <person name="Florea L."/>
            <person name="Halpern A.L."/>
            <person name="Mobarry C.M."/>
            <person name="Lippert R."/>
            <person name="Walenz B."/>
            <person name="Shatkay H."/>
            <person name="Dew I."/>
            <person name="Miller J.R."/>
            <person name="Flanigan M.J."/>
            <person name="Edwards N.J."/>
            <person name="Bolanos R."/>
            <person name="Fasulo D."/>
            <person name="Halldorsson B.V."/>
            <person name="Hannenhalli S."/>
            <person name="Turner R."/>
            <person name="Yooseph S."/>
            <person name="Lu F."/>
            <person name="Nusskern D.R."/>
            <person name="Shue B.C."/>
            <person name="Zheng X.H."/>
            <person name="Zhong F."/>
            <person name="Delcher A.L."/>
            <person name="Huson D.H."/>
            <person name="Kravitz S.A."/>
            <person name="Mouchard L."/>
            <person name="Reinert K."/>
            <person name="Remington K.A."/>
            <person name="Clark A.G."/>
            <person name="Waterman M.S."/>
            <person name="Eichler E.E."/>
            <person name="Adams M.D."/>
            <person name="Hunkapiller M.W."/>
            <person name="Myers E.W."/>
            <person name="Venter J.C."/>
        </authorList>
    </citation>
    <scope>NUCLEOTIDE SEQUENCE [LARGE SCALE GENOMIC DNA]</scope>
</reference>
<reference key="15">
    <citation type="journal article" date="2004" name="Genome Res.">
        <title>The status, quality, and expansion of the NIH full-length cDNA project: the Mammalian Gene Collection (MGC).</title>
        <authorList>
            <consortium name="The MGC Project Team"/>
        </authorList>
    </citation>
    <scope>NUCLEOTIDE SEQUENCE [LARGE SCALE MRNA] (ISOFORM 2)</scope>
    <source>
        <tissue>Cervix</tissue>
        <tissue>Placenta</tissue>
        <tissue>Testis</tissue>
    </source>
</reference>
<reference key="16">
    <citation type="journal article" date="1986" name="Mol. Cell. Biol.">
        <title>Novel promoter upstream of the human c-myc gene and regulation of c-myc expression in B-cell lymphomas.</title>
        <authorList>
            <person name="Bentley D.L."/>
            <person name="Groudine M."/>
        </authorList>
    </citation>
    <scope>NUCLEOTIDE SEQUENCE [MRNA] OF 16-185 (ISOFORM 1)</scope>
    <source>
        <tissue>Promyelocytic leukemia</tissue>
    </source>
</reference>
<reference key="17">
    <citation type="journal article" date="1988" name="Cell">
        <title>A non-AUG translational initiation in c-myc exon 1 generates an N-terminally distinct protein whose synthesis is disrupted in Burkitt's lymphomas.</title>
        <authorList>
            <person name="Hann S.R."/>
            <person name="King M.W."/>
            <person name="Bentley D.L."/>
            <person name="Anderson C.W."/>
            <person name="Eisenman R.N."/>
        </authorList>
    </citation>
    <scope>ALTERNATIVE TRANSLATION INITIATION</scope>
</reference>
<reference key="18">
    <citation type="journal article" date="1990" name="Adv. Cancer Res.">
        <title>The pathogenesis of Burkitt's lymphoma.</title>
        <authorList>
            <person name="Magrath I."/>
        </authorList>
    </citation>
    <scope>INVOLVEMENT IN BURKITT LYMPHOMA</scope>
</reference>
<reference key="19">
    <citation type="journal article" date="1992" name="Eur. J. Biochem.">
        <title>DNA-activated protein kinase in Raji Burkitt's lymphoma cells. Phosphorylation of c-Myc oncoprotein.</title>
        <authorList>
            <person name="Iijima S."/>
            <person name="Teraoka H."/>
            <person name="Date T."/>
            <person name="Tsukada K."/>
        </authorList>
    </citation>
    <scope>PHOSPHORYLATION</scope>
</reference>
<reference key="20">
    <citation type="journal article" date="1993" name="Nat. Genet.">
        <title>Point mutations in the c-Myc transactivation domain are common in Burkitt's lymphoma and mouse plasmacytomas.</title>
        <authorList>
            <person name="Bhatia K."/>
            <person name="Huppi K."/>
            <person name="Spangler G."/>
            <person name="Siwarski D."/>
            <person name="Iyer R."/>
            <person name="Magrath I."/>
        </authorList>
    </citation>
    <scope>INVOLVEMENT IN BURKITT LYMPHOMA</scope>
    <scope>VARIANTS ASP-54; SER-72; ALA-74 AND THR-101</scope>
</reference>
<reference key="21">
    <citation type="journal article" date="1993" name="Proc. Natl. Acad. Sci. U.S.A.">
        <title>Transactivation of gene expression by Myc is inhibited by mutation at the phosphorylation sites Thr-73 and Ser-77.</title>
        <authorList>
            <person name="Gupta S."/>
            <person name="Seth A."/>
            <person name="Davis R.J."/>
        </authorList>
    </citation>
    <scope>PHOSPHORYLATION AT THR-73 AND SER-77</scope>
</reference>
<reference key="22">
    <citation type="journal article" date="1995" name="J. Biol. Chem.">
        <title>c-Myc is glycosylated at threonine 58, a known phosphorylation site and a mutational hot spot in lymphomas.</title>
        <authorList>
            <person name="Chou T.-Y."/>
            <person name="Hart G.W."/>
            <person name="Dang C.V."/>
        </authorList>
    </citation>
    <scope>GLYCOSYLATION AT THR-73</scope>
</reference>
<reference key="23">
    <citation type="journal article" date="1997" name="FEBS Lett.">
        <title>c-Raf kinase binds to N-terminal domain of c-Myc.</title>
        <authorList>
            <person name="Alexandrov I."/>
            <person name="Shlyakhova L."/>
            <person name="Vartanian A."/>
            <person name="Zajac-Kaye M."/>
            <person name="Alexandrova N."/>
        </authorList>
    </citation>
    <scope>PHOSPHORYLATION AT THR-23</scope>
</reference>
<reference key="24">
    <citation type="journal article" date="2004" name="EMBO J.">
        <title>Phosphorylation-dependent degradation of c-Myc is mediated by the F-box protein Fbw7.</title>
        <authorList>
            <person name="Yada M."/>
            <person name="Hatakeyama S."/>
            <person name="Kamura T."/>
            <person name="Nishiyama M."/>
            <person name="Tsunematsu R."/>
            <person name="Imaki H."/>
            <person name="Ishida N."/>
            <person name="Okumura F."/>
            <person name="Nakayama K."/>
            <person name="Nakayama K.I."/>
        </authorList>
    </citation>
    <scope>UBIQUITINATION</scope>
    <scope>INTERACTION WITH FBXW7</scope>
    <scope>PHOSPHORYLATION AT THR-73 AND SER-77</scope>
    <scope>MUTAGENESIS OF THR-73 AND SER-77</scope>
</reference>
<reference key="25">
    <citation type="journal article" date="2005" name="Biochem. Biophys. Res. Commun.">
        <title>Six lysine residues on c-Myc are direct substrates for acetylation by p300.</title>
        <authorList>
            <person name="Zhang K."/>
            <person name="Faiola F."/>
            <person name="Martinez E."/>
        </authorList>
    </citation>
    <scope>ACETYLATION AT LYS-158; LYS-172; LYS-290; LYS-332; LYS-338 AND LYS-386</scope>
    <scope>IDENTIFICATION BY MASS SPECTROMETRY</scope>
</reference>
<reference key="26">
    <citation type="journal article" date="2005" name="Nat. Cell Biol.">
        <title>c-Myc binds to human ribosomal DNA and stimulates transcription of rRNA genes by RNA polymerase I.</title>
        <authorList>
            <person name="Grandori C."/>
            <person name="Gomez-Roman N."/>
            <person name="Felton-Edkins Z.A."/>
            <person name="Ngouenet C."/>
            <person name="Galloway D.A."/>
            <person name="Eisenman R.N."/>
            <person name="White R.J."/>
        </authorList>
    </citation>
    <scope>INTERACTION WITH TAF1C</scope>
</reference>
<reference key="27">
    <citation type="journal article" date="2005" name="Oncogene">
        <title>PARP-10, a novel Myc-interacting protein with poly(ADP-ribose) polymerase activity, inhibits transformation.</title>
        <authorList>
            <person name="Yu M."/>
            <person name="Schreek S."/>
            <person name="Cerni C."/>
            <person name="Schamberger C."/>
            <person name="Lesniewicz K."/>
            <person name="Poreba E."/>
            <person name="Vervoorts J."/>
            <person name="Walsemann G."/>
            <person name="Groetzinger J."/>
            <person name="Kremmer E."/>
            <person name="Mehraein Y."/>
            <person name="Mertsching J."/>
            <person name="Kraft R."/>
            <person name="Austen M."/>
            <person name="Luescher-Firzlaff J."/>
            <person name="Luescher B."/>
        </authorList>
    </citation>
    <scope>INTERACTION WITH PARP10</scope>
</reference>
<reference key="28">
    <citation type="journal article" date="2006" name="Cell">
        <title>Global, in vivo, and site-specific phosphorylation dynamics in signaling networks.</title>
        <authorList>
            <person name="Olsen J.V."/>
            <person name="Blagoev B."/>
            <person name="Gnad F."/>
            <person name="Macek B."/>
            <person name="Kumar C."/>
            <person name="Mortensen P."/>
            <person name="Mann M."/>
        </authorList>
    </citation>
    <scope>PHOSPHORYLATION [LARGE SCALE ANALYSIS] AT THR-73</scope>
    <scope>IDENTIFICATION BY MASS SPECTROMETRY [LARGE SCALE ANALYSIS]</scope>
    <source>
        <tissue>Cervix carcinoma</tissue>
    </source>
</reference>
<reference key="29">
    <citation type="journal article" date="2007" name="Cell">
        <title>CIP2A inhibits PP2A in human malignancies.</title>
        <authorList>
            <person name="Junttila M.R."/>
            <person name="Puustinen P."/>
            <person name="Niemelae M."/>
            <person name="Ahola R."/>
            <person name="Arnold H."/>
            <person name="Boettzauw T."/>
            <person name="Ala-Aho R."/>
            <person name="Nielsen C."/>
            <person name="Ivaska J."/>
            <person name="Taya Y."/>
            <person name="Lu S.-L."/>
            <person name="Lin S."/>
            <person name="Chan E.K.L."/>
            <person name="Wang X.-J."/>
            <person name="Grenman R."/>
            <person name="Kast J."/>
            <person name="Kallunki T."/>
            <person name="Sears R."/>
            <person name="Kaehaeri V.-M."/>
            <person name="Westermarck J."/>
        </authorList>
    </citation>
    <scope>INTERACTION WITH CIP2A</scope>
</reference>
<reference key="30">
    <citation type="journal article" date="2007" name="Cell">
        <title>Induction of pluripotent stem cells from adult human fibroblasts by defined factors.</title>
        <authorList>
            <person name="Takahashi K."/>
            <person name="Tanabe K."/>
            <person name="Ohnuki M."/>
            <person name="Narita M."/>
            <person name="Ichisaka T."/>
            <person name="Tomoda K."/>
            <person name="Yamanaka S."/>
        </authorList>
    </citation>
    <scope>BIOTECHNOLOGY</scope>
</reference>
<reference key="31">
    <citation type="journal article" date="2007" name="Cell Cycle">
        <title>Fbw7 and Usp28 regulate myc protein stability in response to DNA damage.</title>
        <authorList>
            <person name="Popov N."/>
            <person name="Herold S."/>
            <person name="Llamazares M."/>
            <person name="Schulein C."/>
            <person name="Eilers M."/>
        </authorList>
    </citation>
    <scope>UBIQUITINATION</scope>
    <scope>DEUBIQUITINATION BY USP28</scope>
    <scope>INTERACTION WITH FBXW7</scope>
</reference>
<reference key="32">
    <citation type="journal article" date="2007" name="Genes Dev.">
        <title>The Trithorax group protein Lid is a trimethyl histone H3K4 demethylase required for dMyc-induced cell growth.</title>
        <authorList>
            <person name="Secombe J."/>
            <person name="Li L."/>
            <person name="Carlos L."/>
            <person name="Eisenman R.N."/>
        </authorList>
    </citation>
    <scope>INTERACTION WITH KDM5A AND KDM5B</scope>
</reference>
<reference key="33">
    <citation type="journal article" date="2007" name="Mol. Cancer Ther.">
        <title>Identification of Myc-associated protein with JmjC domain as a novel therapeutic target oncogene for lung cancer.</title>
        <authorList>
            <person name="Suzuki C."/>
            <person name="Takahashi K."/>
            <person name="Hayama S."/>
            <person name="Ishikawa N."/>
            <person name="Kato T."/>
            <person name="Ito T."/>
            <person name="Tsuchiya E."/>
            <person name="Nakamura Y."/>
            <person name="Daigo Y."/>
        </authorList>
    </citation>
    <scope>INTERACTION WITH RIOX1</scope>
</reference>
<reference key="34">
    <citation type="journal article" date="2007" name="Nat. Cell Biol.">
        <title>The ubiquitin-specific protease USP28 is required for MYC stability.</title>
        <authorList>
            <person name="Popov N."/>
            <person name="Wanzel M."/>
            <person name="Madiredjo M."/>
            <person name="Zhang D."/>
            <person name="Beijersbergen R."/>
            <person name="Bernards R."/>
            <person name="Moll R."/>
            <person name="Elledge S.J."/>
            <person name="Eilers M."/>
        </authorList>
    </citation>
    <scope>UBIQUITINATION</scope>
    <scope>DEUBIQUITINATION BY USP28</scope>
    <scope>INTERACTION WITH FBXW7</scope>
    <scope>SUBCELLULAR LOCATION</scope>
    <scope>PHOSPHORYLATION AT THR-73 AND SER-77</scope>
    <scope>MUTAGENESIS OF THR-73 AND SER-77</scope>
</reference>
<reference key="35">
    <citation type="journal article" date="2008" name="Proc. Natl. Acad. Sci. U.S.A.">
        <title>A quantitative atlas of mitotic phosphorylation.</title>
        <authorList>
            <person name="Dephoure N."/>
            <person name="Zhou C."/>
            <person name="Villen J."/>
            <person name="Beausoleil S.A."/>
            <person name="Bakalarski C.E."/>
            <person name="Elledge S.J."/>
            <person name="Gygi S.P."/>
        </authorList>
    </citation>
    <scope>PHOSPHORYLATION [LARGE SCALE ANALYSIS] AT THR-73; SER-77 AND SER-86</scope>
    <scope>IDENTIFICATION BY MASS SPECTROMETRY [LARGE SCALE ANALYSIS]</scope>
    <source>
        <tissue>Cervix carcinoma</tissue>
    </source>
</reference>
<reference key="36">
    <citation type="journal article" date="2009" name="Anal. Chem.">
        <title>Lys-N and trypsin cover complementary parts of the phosphoproteome in a refined SCX-based approach.</title>
        <authorList>
            <person name="Gauci S."/>
            <person name="Helbig A.O."/>
            <person name="Slijper M."/>
            <person name="Krijgsveld J."/>
            <person name="Heck A.J."/>
            <person name="Mohammed S."/>
        </authorList>
    </citation>
    <scope>IDENTIFICATION BY MASS SPECTROMETRY [LARGE SCALE ANALYSIS]</scope>
</reference>
<reference key="37">
    <citation type="journal article" date="2009" name="Science">
        <title>Lysine acetylation targets protein complexes and co-regulates major cellular functions.</title>
        <authorList>
            <person name="Choudhary C."/>
            <person name="Kumar C."/>
            <person name="Gnad F."/>
            <person name="Nielsen M.L."/>
            <person name="Rehman M."/>
            <person name="Walther T.C."/>
            <person name="Olsen J.V."/>
            <person name="Mann M."/>
        </authorList>
    </citation>
    <scope>ACETYLATION [LARGE SCALE ANALYSIS] AT LYS-163</scope>
    <scope>IDENTIFICATION BY MASS SPECTROMETRY [LARGE SCALE ANALYSIS]</scope>
</reference>
<reference key="38">
    <citation type="journal article" date="2010" name="Cancer Res.">
        <title>Tipping the balance: Cdk2 enables Myc to suppress senescence.</title>
        <authorList>
            <person name="Hydbring P."/>
            <person name="Larsson L.-G."/>
        </authorList>
    </citation>
    <scope>REVIEW ON SENESCENCE</scope>
    <scope>PHOSPHORYLATION AT SER-77 BY CDK2</scope>
    <scope>MUTAGENESIS OF THR-73 AND SER-77</scope>
</reference>
<reference key="39">
    <citation type="journal article" date="2010" name="Nature">
        <title>HnRNP proteins controlled by c-Myc deregulate pyruvate kinase mRNA splicing in cancer.</title>
        <authorList>
            <person name="David C.J."/>
            <person name="Chen M."/>
            <person name="Assanah M."/>
            <person name="Canoll P."/>
            <person name="Manley J.L."/>
        </authorList>
    </citation>
    <scope>FUNCTION</scope>
</reference>
<reference key="40">
    <citation type="journal article" date="2010" name="Proc. Natl. Acad. Sci. U.S.A.">
        <title>Phosphorylation by Cdk2 is required for Myc to repress Ras-induced senescence in cotransformation.</title>
        <authorList>
            <person name="Hydbring P."/>
            <person name="Bahram F."/>
            <person name="Su Y."/>
            <person name="Tronnersjoe S."/>
            <person name="Hoegstrand K."/>
            <person name="von der Lehr N."/>
            <person name="Sharifi H.R."/>
            <person name="Lilischkis R."/>
            <person name="Hein N."/>
            <person name="Wu S."/>
            <person name="Vervoorts J."/>
            <person name="Henriksson M."/>
            <person name="Grandien A."/>
            <person name="Luescher B."/>
            <person name="Larsson L.-G."/>
        </authorList>
    </citation>
    <scope>PHOSPHORYLATION AT SER-77 BY CDK2</scope>
    <scope>MUTAGENESIS OF THR-73 AND SER-77</scope>
</reference>
<reference key="41">
    <citation type="journal article" date="2010" name="Genes Dev.">
        <title>Myc protein is stabilized by suppression of a novel E3 ligase complex in cancer cells.</title>
        <authorList>
            <person name="Choi S.H."/>
            <person name="Wright J.B."/>
            <person name="Gerber S.A."/>
            <person name="Cole M.D."/>
        </authorList>
    </citation>
    <scope>UBIQUITINATION</scope>
</reference>
<reference key="42">
    <citation type="journal article" date="2010" name="Sci. Signal.">
        <title>Quantitative phosphoproteomics reveals widespread full phosphorylation site occupancy during mitosis.</title>
        <authorList>
            <person name="Olsen J.V."/>
            <person name="Vermeulen M."/>
            <person name="Santamaria A."/>
            <person name="Kumar C."/>
            <person name="Miller M.L."/>
            <person name="Jensen L.J."/>
            <person name="Gnad F."/>
            <person name="Cox J."/>
            <person name="Jensen T.S."/>
            <person name="Nigg E.A."/>
            <person name="Brunak S."/>
            <person name="Mann M."/>
        </authorList>
    </citation>
    <scope>PHOSPHORYLATION [LARGE SCALE ANALYSIS] AT SER-21 AND SER-176</scope>
    <scope>IDENTIFICATION BY MASS SPECTROMETRY [LARGE SCALE ANALYSIS]</scope>
    <source>
        <tissue>Cervix carcinoma</tissue>
    </source>
</reference>
<reference key="43">
    <citation type="journal article" date="2011" name="Sci. Signal.">
        <title>System-wide temporal characterization of the proteome and phosphoproteome of human embryonic stem cell differentiation.</title>
        <authorList>
            <person name="Rigbolt K.T."/>
            <person name="Prokhorova T.A."/>
            <person name="Akimov V."/>
            <person name="Henningsen J."/>
            <person name="Johansen P.T."/>
            <person name="Kratchmarova I."/>
            <person name="Kassem M."/>
            <person name="Mann M."/>
            <person name="Olsen J.V."/>
            <person name="Blagoev B."/>
        </authorList>
    </citation>
    <scope>PHOSPHORYLATION [LARGE SCALE ANALYSIS] AT THR-73 AND SER-77</scope>
    <scope>IDENTIFICATION BY MASS SPECTROMETRY [LARGE SCALE ANALYSIS]</scope>
</reference>
<reference key="44">
    <citation type="journal article" date="2012" name="Cancer Res.">
        <title>Critical function for nuclear envelope protein TMEM209 in human pulmonary carcinogenesis.</title>
        <authorList>
            <person name="Fujitomo T."/>
            <person name="Daigo Y."/>
            <person name="Matsuda K."/>
            <person name="Ueda K."/>
            <person name="Nakamura Y."/>
        </authorList>
    </citation>
    <scope>INTERACTION WITH NUP205</scope>
    <scope>SUBCELLULAR LOCATION</scope>
</reference>
<reference key="45">
    <citation type="journal article" date="2012" name="J. Clin. Invest.">
        <title>DYRK2 priming phosphorylation of c-Jun and c-Myc modulates cell cycle progression in human cancer cells.</title>
        <authorList>
            <person name="Taira N."/>
            <person name="Mimoto R."/>
            <person name="Kurata M."/>
            <person name="Yamaguchi T."/>
            <person name="Kitagawa M."/>
            <person name="Miki Y."/>
            <person name="Yoshida K."/>
        </authorList>
    </citation>
    <scope>PHOSPHORYLATION AT SER-77</scope>
    <scope>MUTAGENESIS OF SER-77</scope>
</reference>
<reference key="46">
    <citation type="journal article" date="2013" name="J. Proteome Res.">
        <title>Toward a comprehensive characterization of a human cancer cell phosphoproteome.</title>
        <authorList>
            <person name="Zhou H."/>
            <person name="Di Palma S."/>
            <person name="Preisinger C."/>
            <person name="Peng M."/>
            <person name="Polat A.N."/>
            <person name="Heck A.J."/>
            <person name="Mohammed S."/>
        </authorList>
    </citation>
    <scope>PHOSPHORYLATION [LARGE SCALE ANALYSIS] AT SER-21; THR-73; SER-77; SER-86 AND SER-308</scope>
    <scope>IDENTIFICATION BY MASS SPECTROMETRY [LARGE SCALE ANALYSIS]</scope>
    <source>
        <tissue>Cervix carcinoma</tissue>
        <tissue>Erythroleukemia</tissue>
    </source>
</reference>
<reference key="47">
    <citation type="journal article" date="2014" name="Elife">
        <title>tRNA synthetase counteracts c-Myc to develop functional vasculature.</title>
        <authorList>
            <person name="Shi Y."/>
            <person name="Xu X."/>
            <person name="Zhang Q."/>
            <person name="Fu G."/>
            <person name="Mo Z."/>
            <person name="Wang G.S."/>
            <person name="Kishi S."/>
            <person name="Yang X.L."/>
        </authorList>
    </citation>
    <scope>FUNCTION</scope>
</reference>
<reference key="48">
    <citation type="journal article" date="2015" name="Am. J. Pathol.">
        <title>The nucleolar protein GLTSCR2 is an upstream negative regulator of the oncogenic Nucleophosmin-MYC axis.</title>
        <authorList>
            <person name="Kim J.Y."/>
            <person name="Cho Y.E."/>
            <person name="Park J.H."/>
        </authorList>
    </citation>
    <scope>FUNCTION</scope>
    <scope>INTERACTION WITH NPM1</scope>
</reference>
<reference key="49">
    <citation type="journal article" date="2015" name="Cell Cycle">
        <title>AMBRA1 and BECLIN 1 interplay in the crosstalk between autophagy and cell proliferation.</title>
        <authorList>
            <person name="Cianfanelli V."/>
            <person name="D'Orazio M."/>
            <person name="Cecconi F."/>
        </authorList>
    </citation>
    <scope>PHOSPHORYLATION AT SER-77</scope>
</reference>
<reference key="50">
    <citation type="journal article" date="2015" name="Nat. Cell Biol.">
        <title>AMBRA1 links autophagy to cell proliferation and tumorigenesis by promoting c-Myc dephosphorylation and degradation.</title>
        <authorList>
            <person name="Cianfanelli V."/>
            <person name="Fuoco C."/>
            <person name="Lorente M."/>
            <person name="Salazar M."/>
            <person name="Quondamatteo F."/>
            <person name="Gherardini P.F."/>
            <person name="De Zio D."/>
            <person name="Nazio F."/>
            <person name="Antonioli M."/>
            <person name="D'Orazio M."/>
            <person name="Skobo T."/>
            <person name="Bordi M."/>
            <person name="Rohde M."/>
            <person name="Dalla Valle L."/>
            <person name="Helmer-Citterich M."/>
            <person name="Gretzmeier C."/>
            <person name="Dengjel J."/>
            <person name="Fimia G.M."/>
            <person name="Piacentini M."/>
            <person name="Di Bartolomeo S."/>
            <person name="Velasco G."/>
            <person name="Cecconi F."/>
        </authorList>
    </citation>
    <scope>PHOSPHORYLATION AT SER-77</scope>
    <scope>DEPHOSPHORYLATION</scope>
    <scope>MUTAGENESIS OF SER-77</scope>
</reference>
<reference key="51">
    <citation type="journal article" date="2015" name="Nat. Cell Biol.">
        <authorList>
            <person name="Cianfanelli V."/>
            <person name="Fuoco C."/>
            <person name="Lorente M."/>
            <person name="Salazar M."/>
            <person name="Quondamatteo F."/>
            <person name="Gherardini P.F."/>
            <person name="De Zio D."/>
            <person name="Nazio F."/>
            <person name="Antonioli M."/>
            <person name="D'Orazio M."/>
            <person name="Skobo T."/>
            <person name="Bordi M."/>
            <person name="Rohde M."/>
            <person name="Dalla Valle L."/>
            <person name="Helmer-Citterich M."/>
            <person name="Gretzmeier C."/>
            <person name="Dengjel J."/>
            <person name="Fimia G.M."/>
            <person name="Piacentini M."/>
            <person name="Di Bartolomeo S."/>
            <person name="Velasco G."/>
            <person name="Cecconi F."/>
        </authorList>
    </citation>
    <scope>ERRATUM OF PUBMED:25438055</scope>
</reference>
<reference key="52">
    <citation type="journal article" date="2015" name="Proc. Natl. Acad. Sci. U.S.A.">
        <title>The nucleolar ubiquitin-specific protease USP36 deubiquitinates and stabilizes c-Myc.</title>
        <authorList>
            <person name="Sun X.X."/>
            <person name="He X."/>
            <person name="Yin L."/>
            <person name="Komada M."/>
            <person name="Sears R.C."/>
            <person name="Dai M.S."/>
        </authorList>
    </citation>
    <scope>UBIQUITINATION</scope>
    <scope>DEUBIQUITINATION BY USP36</scope>
    <scope>INTERACTION WITH FBXW7</scope>
    <scope>SUBCELLULAR LOCATION</scope>
</reference>
<reference key="53">
    <citation type="journal article" date="2017" name="Nat. Struct. Mol. Biol.">
        <title>Site-specific mapping of the human SUMO proteome reveals co-modification with phosphorylation.</title>
        <authorList>
            <person name="Hendriks I.A."/>
            <person name="Lyon D."/>
            <person name="Young C."/>
            <person name="Jensen L.J."/>
            <person name="Vertegaal A.C."/>
            <person name="Nielsen M.L."/>
        </authorList>
    </citation>
    <scope>SUMOYLATION [LARGE SCALE ANALYSIS] AT LYS-67; LYS-158; LYS-163 AND LYS-313</scope>
    <scope>IDENTIFICATION BY MASS SPECTROMETRY [LARGE SCALE ANALYSIS]</scope>
</reference>
<reference key="54">
    <citation type="journal article" date="2018" name="Cell">
        <title>The eukaryotic proteome is shaped by E3 ubiquitin ligases targeting C-terminal degrons.</title>
        <authorList>
            <person name="Koren I."/>
            <person name="Timms R.T."/>
            <person name="Kula T."/>
            <person name="Xu Q."/>
            <person name="Li M.Z."/>
            <person name="Elledge S.J."/>
        </authorList>
    </citation>
    <scope>UBIQUITINATION</scope>
    <scope>MUTAGENESIS OF ARG-450</scope>
</reference>
<reference key="55">
    <citation type="journal article" date="2018" name="Nat. Commun.">
        <title>MYC dephosphorylation by the PP1/PNUTS phosphatase complex regulates chromatin binding and protein stability.</title>
        <authorList>
            <person name="Dingar D."/>
            <person name="Tu W.B."/>
            <person name="Resetca D."/>
            <person name="Lourenco C."/>
            <person name="Tamachi A."/>
            <person name="De Melo J."/>
            <person name="Houlahan K.E."/>
            <person name="Kalkat M."/>
            <person name="Chan P.K."/>
            <person name="Boutros P.C."/>
            <person name="Raught B."/>
            <person name="Penn L.Z."/>
        </authorList>
    </citation>
    <scope>UBIQUITINATION</scope>
    <scope>PHOSPHORYLATION AT THR-73; SER-77; SER-86; SER-96; SER-166; SER-174; SER-176; SER-329; THR-330; SER-359; SER-362 AND SER-363</scope>
    <scope>DEPHOSPHORYLATION</scope>
    <scope>SUBCELLULAR LOCATION</scope>
</reference>
<reference key="56">
    <citation type="journal article" date="2020" name="Sci. Rep.">
        <title>Identification of the HECT E3 ligase UBR5 as a regulator of MYC degradation using a CRISPR/Cas9 screen.</title>
        <authorList>
            <person name="Schukur L."/>
            <person name="Zimmermann T."/>
            <person name="Niewoehner O."/>
            <person name="Kerr G."/>
            <person name="Gleim S."/>
            <person name="Bauer-Probst B."/>
            <person name="Knapp B."/>
            <person name="Galli G.G."/>
            <person name="Liang X."/>
            <person name="Mendiola A."/>
            <person name="Reece-Hoyes J."/>
            <person name="Rapti M."/>
            <person name="Barbosa I."/>
            <person name="Reschke M."/>
            <person name="Radimerski T."/>
            <person name="Thoma C.R."/>
        </authorList>
    </citation>
    <scope>UBIQUITINATION</scope>
</reference>
<reference key="57">
    <citation type="journal article" date="2021" name="Stem. Cell. Rev. Rep.">
        <title>The 9aaTAD Activation Domains in the Yamanaka Transcription Factors Oct4, Sox2, Myc, and Klf4.</title>
        <authorList>
            <person name="Piskacek M."/>
            <person name="Otasevic T."/>
            <person name="Repko M."/>
            <person name="Knight A."/>
        </authorList>
    </citation>
    <scope>9AATAD MOTIF</scope>
</reference>
<reference key="58">
    <citation type="journal article" date="2023" name="Cell">
        <title>Orphan quality control shapes network dynamics and gene expression.</title>
        <authorList>
            <person name="Mark K.G."/>
            <person name="Kolla S."/>
            <person name="Aguirre J.D."/>
            <person name="Garshott D.M."/>
            <person name="Schmitt S."/>
            <person name="Haakonsen D.L."/>
            <person name="Xu C."/>
            <person name="Kater L."/>
            <person name="Kempf G."/>
            <person name="Martinez-Gonzalez B."/>
            <person name="Akopian D."/>
            <person name="See S.K."/>
            <person name="Thomae N.H."/>
            <person name="Rape M."/>
        </authorList>
    </citation>
    <scope>UBIQUITINATION</scope>
</reference>
<reference key="59">
    <citation type="journal article" date="2024" name="EMBO Rep.">
        <title>Ribogenesis boosts controlled by HEATR1-MYC interplay promote transition into brain tumour growth.</title>
        <authorList>
            <person name="Diaz L.R."/>
            <person name="Gil-Ranedo J."/>
            <person name="Jaworek K.J."/>
            <person name="Nsek N."/>
            <person name="Marques J.P."/>
            <person name="Costa E."/>
            <person name="Hilton D.A."/>
            <person name="Bieluczyk H."/>
            <person name="Warrington O."/>
            <person name="Hanemann C.O."/>
            <person name="Futschik M.E."/>
            <person name="Bossing T."/>
            <person name="Barros C.S."/>
        </authorList>
    </citation>
    <scope>INTERACTION WITH HEATR1</scope>
    <scope>SUBCELLULAR LOCATION</scope>
</reference>
<reference key="60">
    <citation type="journal article" date="1998" name="J. Mol. Biol.">
        <title>Insights into the mechanism of heterodimerization from the 1H-NMR solution structure of the c-Myc-Max heterodimeric leucine zipper.</title>
        <authorList>
            <person name="Lavigne P."/>
            <person name="Crump M.P."/>
            <person name="Gagne S.M."/>
            <person name="Hodges R.S."/>
            <person name="Kay C.M."/>
            <person name="Sykes B.D."/>
        </authorList>
    </citation>
    <scope>STRUCTURE BY NMR OF 417-449 IN COMPLEX WITH MAX</scope>
</reference>
<reference key="61">
    <citation type="journal article" date="1991" name="Genes Chromosomes Cancer">
        <title>A chromosome 12 coding region is juxtaposed to the MYC protooncogene locus in a t(8;12)(q24;q22) translocation in a case of B-cell chronic lymphocytic leukemia.</title>
        <authorList>
            <person name="Rimokh R."/>
            <person name="Rouault J.P."/>
            <person name="Wahbi K."/>
            <person name="Gadoux M."/>
            <person name="Lafage M."/>
            <person name="Archimbaud E."/>
            <person name="Charrin C."/>
            <person name="Gentilhomme O."/>
            <person name="Germain D."/>
            <person name="Samarut J."/>
        </authorList>
    </citation>
    <scope>CHROMOSOMAL TRANSLOCATION WITH BTG1</scope>
</reference>
<comment type="function">
    <text evidence="1 16 23 27">Transcription factor that binds DNA in a non-specific manner, yet also specifically recognizes the core sequence 5'-CAC[GA]TG-3' (PubMed:24940000, PubMed:25956029). Activates the transcription of growth-related genes (PubMed:24940000, PubMed:25956029). Binds to the VEGFA promoter, promoting VEGFA production and subsequent sprouting angiogenesis (PubMed:24940000, PubMed:25956029). Regulator of somatic reprogramming, controls self-renewal of embryonic stem cells (By similarity). Functions with TAF6L to activate target gene expression through RNA polymerase II pause release (By similarity). Positively regulates transcription of HNRNPA1, HNRNPA2 and PTBP1 which in turn regulate splicing of pyruvate kinase PKM by binding repressively to sequences flanking PKM exon 9, inhibiting exon 9 inclusion and resulting in exon 10 inclusion and production of the PKM M2 isoform (PubMed:20010808).</text>
</comment>
<comment type="subunit">
    <text evidence="1 4 5 6 9 10 11 12 13 22 25 27 33 39">Efficient DNA binding requires dimerization with another bHLH protein. Binds DNA as a heterodimer with MAX (PubMed:9680483). Interacts with TAF1C and SPAG9. Interacts with PARP10. Interacts with KDM5A and KDM5B. Interacts (when phosphorylated at Thr-73 and Ser-77) with FBXW7 (PubMed:17558397, PubMed:25775507). Interacts with PIM2. Interacts with RIOX1. The heterodimer MYC:MAX interacts with ABI1; the interaction may enhance MYC:MAX transcriptional activity. Interacts with TRIM6 (By similarity). Interacts with NPM1; the binary complex is recruited to the promoter of MYC target genes and enhances their transcription (PubMed:25956029). Interacts with CIP2A; leading to the stabilization of MYC (PubMed:17632056). Interacts with NUP205 (PubMed:22719065). Interacts with HEATR1; the interaction is required for localization of MYC to the nucleolus (PubMed:38225354).</text>
</comment>
<comment type="interaction">
    <interactant intactId="EBI-447544">
        <id>P01106</id>
    </interactant>
    <interactant intactId="EBI-702390">
        <id>Q9UBB4</id>
        <label>ATXN10</label>
    </interactant>
    <organismsDiffer>false</organismsDiffer>
    <experiments>4</experiments>
</comment>
<comment type="interaction">
    <interactant intactId="EBI-447544">
        <id>P01106</id>
    </interactant>
    <interactant intactId="EBI-710484">
        <id>O15169</id>
        <label>AXIN1</label>
    </interactant>
    <organismsDiffer>false</organismsDiffer>
    <experiments>10</experiments>
</comment>
<comment type="interaction">
    <interactant intactId="EBI-447544">
        <id>P01106</id>
    </interactant>
    <interactant intactId="EBI-7689134">
        <id>O00499-10</id>
        <label>BIN1</label>
    </interactant>
    <organismsDiffer>false</organismsDiffer>
    <experiments>3</experiments>
</comment>
<comment type="interaction">
    <interactant intactId="EBI-447544">
        <id>P01106</id>
    </interactant>
    <interactant intactId="EBI-7689211">
        <id>O00499-11</id>
        <label>BIN1</label>
    </interactant>
    <organismsDiffer>false</organismsDiffer>
    <experiments>2</experiments>
</comment>
<comment type="interaction">
    <interactant intactId="EBI-447544">
        <id>P01106</id>
    </interactant>
    <interactant intactId="EBI-1383460">
        <id>Q15059</id>
        <label>BRD3</label>
    </interactant>
    <organismsDiffer>false</organismsDiffer>
    <experiments>3</experiments>
</comment>
<comment type="interaction">
    <interactant intactId="EBI-447544">
        <id>P01106</id>
    </interactant>
    <interactant intactId="EBI-718729">
        <id>P55212</id>
        <label>CASP6</label>
    </interactant>
    <organismsDiffer>false</organismsDiffer>
    <experiments>3</experiments>
</comment>
<comment type="interaction">
    <interactant intactId="EBI-447544">
        <id>P01106</id>
    </interactant>
    <interactant intactId="EBI-78219">
        <id>P45973</id>
        <label>CBX5</label>
    </interactant>
    <organismsDiffer>false</organismsDiffer>
    <experiments>3</experiments>
</comment>
<comment type="interaction">
    <interactant intactId="EBI-447544">
        <id>P01106</id>
    </interactant>
    <interactant intactId="EBI-355410">
        <id>Q8N163</id>
        <label>CCAR2</label>
    </interactant>
    <organismsDiffer>false</organismsDiffer>
    <experiments>8</experiments>
</comment>
<comment type="interaction">
    <interactant intactId="EBI-447544">
        <id>P01106</id>
    </interactant>
    <interactant intactId="EBI-6624398">
        <id>P06307</id>
        <label>CCK</label>
    </interactant>
    <organismsDiffer>false</organismsDiffer>
    <experiments>3</experiments>
</comment>
<comment type="interaction">
    <interactant intactId="EBI-447544">
        <id>P01106</id>
    </interactant>
    <interactant intactId="EBI-7793316">
        <id>A5D8W4</id>
        <label>CDH1</label>
    </interactant>
    <organismsDiffer>false</organismsDiffer>
    <experiments>3</experiments>
</comment>
<comment type="interaction">
    <interactant intactId="EBI-447544">
        <id>P01106</id>
    </interactant>
    <interactant intactId="EBI-295644">
        <id>P11802</id>
        <label>CDK4</label>
    </interactant>
    <organismsDiffer>false</organismsDiffer>
    <experiments>2</experiments>
</comment>
<comment type="interaction">
    <interactant intactId="EBI-447544">
        <id>P01106</id>
    </interactant>
    <interactant intactId="EBI-308614">
        <id>Q86XR8</id>
        <label>CEP57</label>
    </interactant>
    <organismsDiffer>false</organismsDiffer>
    <experiments>3</experiments>
</comment>
<comment type="interaction">
    <interactant intactId="EBI-447544">
        <id>P01106</id>
    </interactant>
    <interactant intactId="EBI-25837549">
        <id>P28329-3</id>
        <label>CHAT</label>
    </interactant>
    <organismsDiffer>false</organismsDiffer>
    <experiments>3</experiments>
</comment>
<comment type="interaction">
    <interactant intactId="EBI-447544">
        <id>P01106</id>
    </interactant>
    <interactant intactId="EBI-372916">
        <id>Q14839</id>
        <label>CHD4</label>
    </interactant>
    <organismsDiffer>false</organismsDiffer>
    <experiments>2</experiments>
</comment>
<comment type="interaction">
    <interactant intactId="EBI-447544">
        <id>P01106</id>
    </interactant>
    <interactant intactId="EBI-81249">
        <id>O15111</id>
        <label>CHUK</label>
    </interactant>
    <organismsDiffer>false</organismsDiffer>
    <experiments>3</experiments>
</comment>
<comment type="interaction">
    <interactant intactId="EBI-447544">
        <id>P01106</id>
    </interactant>
    <interactant intactId="EBI-1379376">
        <id>Q8TCG1</id>
        <label>CIP2A</label>
    </interactant>
    <organismsDiffer>false</organismsDiffer>
    <experiments>2</experiments>
</comment>
<comment type="interaction">
    <interactant intactId="EBI-447544">
        <id>P01106</id>
    </interactant>
    <interactant intactId="EBI-750300">
        <id>Q01658</id>
        <label>DR1</label>
    </interactant>
    <organismsDiffer>false</organismsDiffer>
    <experiments>3</experiments>
</comment>
<comment type="interaction">
    <interactant intactId="EBI-447544">
        <id>P01106</id>
    </interactant>
    <interactant intactId="EBI-357897">
        <id>Q15029</id>
        <label>EFTUD2</label>
    </interactant>
    <organismsDiffer>false</organismsDiffer>
    <experiments>5</experiments>
</comment>
<comment type="interaction">
    <interactant intactId="EBI-447544">
        <id>P01106</id>
    </interactant>
    <interactant intactId="EBI-399163">
        <id>Q96L91</id>
        <label>EP400</label>
    </interactant>
    <organismsDiffer>false</organismsDiffer>
    <experiments>6</experiments>
</comment>
<comment type="interaction">
    <interactant intactId="EBI-447544">
        <id>P01106</id>
    </interactant>
    <interactant intactId="EBI-15698003">
        <id>Q96L91-2</id>
        <label>EP400</label>
    </interactant>
    <organismsDiffer>false</organismsDiffer>
    <experiments>2</experiments>
</comment>
<comment type="interaction">
    <interactant intactId="EBI-447544">
        <id>P01106</id>
    </interactant>
    <interactant intactId="EBI-359574">
        <id>Q969H0</id>
        <label>FBXW7</label>
    </interactant>
    <organismsDiffer>false</organismsDiffer>
    <experiments>7</experiments>
</comment>
<comment type="interaction">
    <interactant intactId="EBI-447544">
        <id>P01106</id>
    </interactant>
    <interactant intactId="EBI-914770">
        <id>Q8N3Y1</id>
        <label>FBXW8</label>
    </interactant>
    <organismsDiffer>false</organismsDiffer>
    <experiments>3</experiments>
</comment>
<comment type="interaction">
    <interactant intactId="EBI-447544">
        <id>P01106</id>
    </interactant>
    <interactant intactId="EBI-348399">
        <id>P22607</id>
        <label>FGFR3</label>
    </interactant>
    <organismsDiffer>false</organismsDiffer>
    <experiments>3</experiments>
</comment>
<comment type="interaction">
    <interactant intactId="EBI-447544">
        <id>P01106</id>
    </interactant>
    <interactant intactId="EBI-1644164">
        <id>O43524</id>
        <label>FOXO3</label>
    </interactant>
    <organismsDiffer>false</organismsDiffer>
    <experiments>3</experiments>
</comment>
<comment type="interaction">
    <interactant intactId="EBI-447544">
        <id>P01106</id>
    </interactant>
    <interactant intactId="EBI-15870655">
        <id>P49841-2</id>
        <label>GSK3B</label>
    </interactant>
    <organismsDiffer>false</organismsDiffer>
    <experiments>3</experiments>
</comment>
<comment type="interaction">
    <interactant intactId="EBI-447544">
        <id>P01106</id>
    </interactant>
    <interactant intactId="EBI-351506">
        <id>P06396</id>
        <label>GSN</label>
    </interactant>
    <organismsDiffer>false</organismsDiffer>
    <experiments>3</experiments>
</comment>
<comment type="interaction">
    <interactant intactId="EBI-447544">
        <id>P01106</id>
    </interactant>
    <interactant intactId="EBI-389564">
        <id>Q00403</id>
        <label>GTF2B</label>
    </interactant>
    <organismsDiffer>false</organismsDiffer>
    <experiments>3</experiments>
</comment>
<comment type="interaction">
    <interactant intactId="EBI-447544">
        <id>P01106</id>
    </interactant>
    <interactant intactId="EBI-1054873">
        <id>Q9Y5Q9</id>
        <label>GTF3C3</label>
    </interactant>
    <organismsDiffer>false</organismsDiffer>
    <experiments>4</experiments>
</comment>
<comment type="interaction">
    <interactant intactId="EBI-447544">
        <id>P01106</id>
    </interactant>
    <interactant intactId="EBI-301821">
        <id>Q92769</id>
        <label>HDAC2</label>
    </interactant>
    <organismsDiffer>false</organismsDiffer>
    <experiments>2</experiments>
</comment>
<comment type="interaction">
    <interactant intactId="EBI-447544">
        <id>P01106</id>
    </interactant>
    <interactant intactId="EBI-607682">
        <id>O15379</id>
        <label>HDAC3</label>
    </interactant>
    <organismsDiffer>false</organismsDiffer>
    <experiments>6</experiments>
</comment>
<comment type="interaction">
    <interactant intactId="EBI-447544">
        <id>P01106</id>
    </interactant>
    <interactant intactId="EBI-81279">
        <id>Q9Y6K9</id>
        <label>IKBKG</label>
    </interactant>
    <organismsDiffer>false</organismsDiffer>
    <experiments>3</experiments>
</comment>
<comment type="interaction">
    <interactant intactId="EBI-447544">
        <id>P01106</id>
    </interactant>
    <interactant intactId="EBI-710124">
        <id>O60341</id>
        <label>KDM1A</label>
    </interactant>
    <organismsDiffer>false</organismsDiffer>
    <experiments>4</experiments>
</comment>
<comment type="interaction">
    <interactant intactId="EBI-447544">
        <id>P01106</id>
    </interactant>
    <interactant intactId="EBI-396343">
        <id>O00629</id>
        <label>KPNA4</label>
    </interactant>
    <organismsDiffer>false</organismsDiffer>
    <experiments>20</experiments>
</comment>
<comment type="interaction">
    <interactant intactId="EBI-447544">
        <id>P01106</id>
    </interactant>
    <interactant intactId="EBI-21591415">
        <id>P13473-2</id>
        <label>LAMP2</label>
    </interactant>
    <organismsDiffer>false</organismsDiffer>
    <experiments>3</experiments>
</comment>
<comment type="interaction">
    <interactant intactId="EBI-447544">
        <id>P01106</id>
    </interactant>
    <interactant intactId="EBI-751711">
        <id>P61244</id>
        <label>MAX</label>
    </interactant>
    <organismsDiffer>false</organismsDiffer>
    <experiments>46</experiments>
</comment>
<comment type="interaction">
    <interactant intactId="EBI-447544">
        <id>P01106</id>
    </interactant>
    <interactant intactId="EBI-1783068">
        <id>O95983</id>
        <label>MBD3</label>
    </interactant>
    <organismsDiffer>false</organismsDiffer>
    <experiments>3</experiments>
</comment>
<comment type="interaction">
    <interactant intactId="EBI-447544">
        <id>P01106</id>
    </interactant>
    <interactant intactId="EBI-355924">
        <id>P33993</id>
        <label>MCM7</label>
    </interactant>
    <organismsDiffer>false</organismsDiffer>
    <experiments>6</experiments>
</comment>
<comment type="interaction">
    <interactant intactId="EBI-447544">
        <id>P01106</id>
    </interactant>
    <interactant intactId="EBI-373498">
        <id>A9UHW6</id>
        <label>MIF4GD</label>
    </interactant>
    <organismsDiffer>false</organismsDiffer>
    <experiments>2</experiments>
</comment>
<comment type="interaction">
    <interactant intactId="EBI-447544">
        <id>P01106</id>
    </interactant>
    <interactant intactId="EBI-447544">
        <id>P01106</id>
        <label>MYC</label>
    </interactant>
    <organismsDiffer>false</organismsDiffer>
    <experiments>2</experiments>
</comment>
<comment type="interaction">
    <interactant intactId="EBI-447544">
        <id>P01106</id>
    </interactant>
    <interactant intactId="EBI-348555">
        <id>O75928</id>
        <label>PIAS2</label>
    </interactant>
    <organismsDiffer>false</organismsDiffer>
    <experiments>4</experiments>
</comment>
<comment type="interaction">
    <interactant intactId="EBI-447544">
        <id>P01106</id>
    </interactant>
    <interactant intactId="EBI-714158">
        <id>Q13526</id>
        <label>PIN1</label>
    </interactant>
    <organismsDiffer>false</organismsDiffer>
    <experiments>5</experiments>
</comment>
<comment type="interaction">
    <interactant intactId="EBI-447544">
        <id>P01106</id>
    </interactant>
    <interactant intactId="EBI-5280197">
        <id>O75400-2</id>
        <label>PRPF40A</label>
    </interactant>
    <organismsDiffer>false</organismsDiffer>
    <experiments>3</experiments>
</comment>
<comment type="interaction">
    <interactant intactId="EBI-447544">
        <id>P01106</id>
    </interactant>
    <interactant intactId="EBI-354380">
        <id>P62913</id>
        <label>RPL11</label>
    </interactant>
    <organismsDiffer>false</organismsDiffer>
    <experiments>3</experiments>
</comment>
<comment type="interaction">
    <interactant intactId="EBI-447544">
        <id>P01106</id>
    </interactant>
    <interactant intactId="EBI-2623095">
        <id>Q9Y371</id>
        <label>SH3GLB1</label>
    </interactant>
    <organismsDiffer>false</organismsDiffer>
    <experiments>3</experiments>
</comment>
<comment type="interaction">
    <interactant intactId="EBI-447544">
        <id>P01106</id>
    </interactant>
    <interactant intactId="EBI-540462">
        <id>O75182</id>
        <label>SIN3B</label>
    </interactant>
    <organismsDiffer>false</organismsDiffer>
    <experiments>7</experiments>
</comment>
<comment type="interaction">
    <interactant intactId="EBI-447544">
        <id>P01106</id>
    </interactant>
    <interactant intactId="EBI-1802965">
        <id>Q96EB6</id>
        <label>SIRT1</label>
    </interactant>
    <organismsDiffer>false</organismsDiffer>
    <experiments>4</experiments>
</comment>
<comment type="interaction">
    <interactant intactId="EBI-447544">
        <id>P01106</id>
    </interactant>
    <interactant intactId="EBI-712415">
        <id>Q8N6T7</id>
        <label>SIRT6</label>
    </interactant>
    <organismsDiffer>false</organismsDiffer>
    <experiments>3</experiments>
</comment>
<comment type="interaction">
    <interactant intactId="EBI-447544">
        <id>P01106</id>
    </interactant>
    <interactant intactId="EBI-456291">
        <id>Q13309</id>
        <label>SKP2</label>
    </interactant>
    <organismsDiffer>false</organismsDiffer>
    <experiments>2</experiments>
</comment>
<comment type="interaction">
    <interactant intactId="EBI-447544">
        <id>P01106</id>
    </interactant>
    <interactant intactId="EBI-749336">
        <id>Q8TAD8</id>
        <label>SNIP1</label>
    </interactant>
    <organismsDiffer>false</organismsDiffer>
    <experiments>9</experiments>
</comment>
<comment type="interaction">
    <interactant intactId="EBI-447544">
        <id>P01106</id>
    </interactant>
    <interactant intactId="EBI-298336">
        <id>P08047</id>
        <label>SP1</label>
    </interactant>
    <organismsDiffer>false</organismsDiffer>
    <experiments>4</experiments>
</comment>
<comment type="interaction">
    <interactant intactId="EBI-447544">
        <id>P01106</id>
    </interactant>
    <interactant intactId="EBI-1054052">
        <id>P31948</id>
        <label>STIP1</label>
    </interactant>
    <organismsDiffer>false</organismsDiffer>
    <experiments>3</experiments>
</comment>
<comment type="interaction">
    <interactant intactId="EBI-447544">
        <id>P01106</id>
    </interactant>
    <interactant intactId="EBI-372899">
        <id>Q13148</id>
        <label>TARDBP</label>
    </interactant>
    <organismsDiffer>false</organismsDiffer>
    <experiments>6</experiments>
</comment>
<comment type="interaction">
    <interactant intactId="EBI-447544">
        <id>P01106</id>
    </interactant>
    <interactant intactId="EBI-296151">
        <id>P37173</id>
        <label>TGFBR2</label>
    </interactant>
    <organismsDiffer>false</organismsDiffer>
    <experiments>3</experiments>
</comment>
<comment type="interaction">
    <interactant intactId="EBI-447544">
        <id>P01106</id>
    </interactant>
    <interactant intactId="EBI-876302">
        <id>P11387</id>
        <label>TOP1</label>
    </interactant>
    <organismsDiffer>false</organismsDiffer>
    <experiments>3</experiments>
</comment>
<comment type="interaction">
    <interactant intactId="EBI-447544">
        <id>P01106</id>
    </interactant>
    <interactant intactId="EBI-308443">
        <id>Q14669</id>
        <label>TRIP12</label>
    </interactant>
    <organismsDiffer>false</organismsDiffer>
    <experiments>7</experiments>
</comment>
<comment type="interaction">
    <interactant intactId="EBI-447544">
        <id>P01106</id>
    </interactant>
    <interactant intactId="EBI-399128">
        <id>Q9Y4A5</id>
        <label>TRRAP</label>
    </interactant>
    <organismsDiffer>false</organismsDiffer>
    <experiments>7</experiments>
</comment>
<comment type="interaction">
    <interactant intactId="EBI-447544">
        <id>P01106</id>
    </interactant>
    <interactant intactId="EBI-3390054">
        <id>P0CG48</id>
        <label>UBC</label>
    </interactant>
    <organismsDiffer>false</organismsDiffer>
    <experiments>5</experiments>
</comment>
<comment type="interaction">
    <interactant intactId="EBI-447544">
        <id>P01106</id>
    </interactant>
    <interactant intactId="EBI-741480">
        <id>Q9UMX0</id>
        <label>UBQLN1</label>
    </interactant>
    <organismsDiffer>false</organismsDiffer>
    <experiments>3</experiments>
</comment>
<comment type="interaction">
    <interactant intactId="EBI-447544">
        <id>P01106</id>
    </interactant>
    <interactant intactId="EBI-396235">
        <id>P17480</id>
        <label>UBTF</label>
    </interactant>
    <organismsDiffer>false</organismsDiffer>
    <experiments>2</experiments>
</comment>
<comment type="interaction">
    <interactant intactId="EBI-447544">
        <id>P01106</id>
    </interactant>
    <interactant intactId="EBI-372156">
        <id>Q13105</id>
        <label>ZBTB17</label>
    </interactant>
    <organismsDiffer>false</organismsDiffer>
    <experiments>9</experiments>
</comment>
<comment type="interaction">
    <interactant intactId="EBI-447544">
        <id>P01106</id>
    </interactant>
    <interactant intactId="EBI-25900580">
        <id>Q9Y649</id>
    </interactant>
    <organismsDiffer>false</organismsDiffer>
    <experiments>3</experiments>
</comment>
<comment type="interaction">
    <interactant intactId="EBI-447544">
        <id>P01106</id>
    </interactant>
    <interactant intactId="EBI-866453">
        <id>P03129</id>
        <label>E7</label>
    </interactant>
    <organismsDiffer>true</organismsDiffer>
    <experiments>2</experiments>
</comment>
<comment type="interaction">
    <interactant intactId="EBI-447544">
        <id>P01106</id>
    </interactant>
    <interactant intactId="EBI-7005254">
        <id>P04020</id>
        <label>E7</label>
    </interactant>
    <organismsDiffer>true</organismsDiffer>
    <experiments>2</experiments>
</comment>
<comment type="interaction">
    <interactant intactId="EBI-447544">
        <id>P01106</id>
    </interactant>
    <interactant intactId="EBI-1776887">
        <id>P06788</id>
        <label>E7</label>
    </interactant>
    <organismsDiffer>true</organismsDiffer>
    <experiments>5</experiments>
</comment>
<comment type="interaction">
    <interactant intactId="EBI-447544">
        <id>P01106</id>
    </interactant>
    <interactant intactId="EBI-9255985">
        <id>P03204</id>
        <label>EBNA6</label>
    </interactant>
    <organismsDiffer>true</organismsDiffer>
    <experiments>11</experiments>
</comment>
<comment type="interaction">
    <interactant intactId="EBI-447544">
        <id>P01106</id>
    </interactant>
    <interactant intactId="EBI-1184963">
        <id>P52164</id>
        <label>Max</label>
    </interactant>
    <organismsDiffer>true</organismsDiffer>
    <experiments>4</experiments>
</comment>
<comment type="interaction">
    <interactant intactId="EBI-447544">
        <id>P01106</id>
    </interactant>
    <interactant intactId="EBI-591450">
        <id>Q62141</id>
        <label>Sin3b</label>
    </interactant>
    <organismsDiffer>true</organismsDiffer>
    <experiments>8</experiments>
</comment>
<comment type="interaction">
    <interactant intactId="EBI-447544">
        <id>P01106</id>
    </interactant>
    <interactant intactId="EBI-617698">
        <id>P03070</id>
    </interactant>
    <organismsDiffer>true</organismsDiffer>
    <experiments>2</experiments>
</comment>
<comment type="subcellular location">
    <subcellularLocation>
        <location evidence="11">Nucleus</location>
        <location evidence="11">Nucleoplasm</location>
    </subcellularLocation>
    <subcellularLocation>
        <location evidence="11 25 33">Nucleus</location>
        <location evidence="11 25 33">Nucleolus</location>
    </subcellularLocation>
    <subcellularLocation>
        <location evidence="22 33">Nucleus</location>
    </subcellularLocation>
    <subcellularLocation>
        <location evidence="22">Cytoplasm</location>
    </subcellularLocation>
    <subcellularLocation>
        <location evidence="29">Chromosome</location>
    </subcellularLocation>
    <text evidence="29 33">Association with chromatin is reduced by hyperphosphorylation (PubMed:30158517). Localization to the nucleolus is dependent on HEATR1 (PubMed:38225354).</text>
</comment>
<comment type="alternative products">
    <event type="alternative splicing"/>
    <event type="alternative initiation"/>
    <isoform>
        <id>P01106-2</id>
        <name>2</name>
        <name evidence="41">c-myc 1</name>
        <sequence type="displayed"/>
    </isoform>
    <isoform>
        <id>P01106-1</id>
        <name>1</name>
        <name evidence="41">c-myc 2</name>
        <sequence type="described" ref="VSP_061778"/>
    </isoform>
    <isoform>
        <id>P01106-3</id>
        <name>3</name>
        <sequence type="described" ref="VSP_061779"/>
    </isoform>
</comment>
<comment type="domain">
    <text evidence="31">The 9aaTAD motif is a transactivation domain present in a large number of yeast and animal transcription factors.</text>
</comment>
<comment type="PTM">
    <text evidence="1 4 7 11 15 19 21 24 26 29 37">Phosphorylated by PRKDC (PubMed:1597196). Phosphorylation at Ser-344 by PIM2 leads to the stabilization of MYC (By similarity). Phosphorylation at Ser-77 by CDK2 prevents Ras-induced senescence (PubMed:19966300, PubMed:20713526). Phosphorylated at Ser-77 by DYRK2; this primes the protein for subsequent phosphorylation by GSK3B at Thr-73 (PubMed:22307329). Phosphorylation at Thr-73 and Ser-77 by GSK3 is required for ubiquitination and degradation by the proteasome (PubMed:15103331, PubMed:17558397, PubMed:8386367). Dephosphorylation at multiple sites by the PNUTS-PP1 complex promotes MYC stability by preventing ubiquitination by the SCF(FBXW7) complex (PubMed:30158517). Dephosphorylation at Ser-77 by protein phosphatase 2A (PPP2CA) promotes its degradation; interaction with PPP2CA is enhanced by AMBRA1 (PubMed:25438055, PubMed:25803737).</text>
</comment>
<comment type="PTM">
    <text evidence="1 4 11 13 17 25 28 29 30 32">Ubiquitinated by the SCF(FBXW7) complex when phosphorylated at Thr-73 and Ser-77, leading to its degradation by the proteasome (PubMed:15103331, PubMed:17558397, PubMed:25775507, PubMed:30158517). In the nucleoplasm, ubiquitination is counteracted by USP28, which interacts with isoform 1 of FBXW7 (FBW7alpha), leading to its deubiquitination and preventing degradation (PubMed:17558397, PubMed:17873522). In the nucleolus, however, ubiquitination is not counteracted by USP28 but by USP36, due to the lack of interaction between isoform 3 of FBXW7 (FBW7gamma) and USP28, explaining the selective MYC degradation in the nucleolus (PubMed:17558397, PubMed:25775507). Also polyubiquitinated by the DCX(TRPC4AP) complex (PubMed:20551172, PubMed:29779948). Ubiquitinated by UBR5 when not forming a heterodimer with another bHLH protein, leading to its degradation: UBR5 recognizes and binds a degron that is only available upon heterodimer dissociation (PubMed:33208877, PubMed:37478862). Ubiquitinated by TRIM6 in a phosphorylation-independent manner (By similarity).</text>
</comment>
<comment type="disease">
    <text evidence="18">A chromosomal aberration involving MYC may be a cause of a form of B-cell chronic lymphocytic leukemia. Translocation t(8;12)(q24;q22) with BTG1.</text>
</comment>
<comment type="disease" evidence="20 36">
    <disease id="DI-02613">
        <name>Burkitt lymphoma</name>
        <acronym>BL</acronym>
        <description>A form of undifferentiated malignant lymphoma commonly manifested as a large osteolytic lesion in the jaw or as an abdominal mass.</description>
        <dbReference type="MIM" id="113970"/>
    </disease>
    <text>The gene represented in this entry is involved in disease pathogenesis. Chromosomal aberrations involving MYC are usually found in Burkitt lymphoma. Translocations t(8;14), t(8;22) or t(2;8) which juxtapose MYC to one of the heavy or light chain immunoglobulin gene loci.</text>
</comment>
<comment type="biotechnology">
    <text evidence="14">POU5F1/OCT4, SOX2, MYC/c-Myc and KLF4 are the four Yamanaka factors. When combined, these factors are sufficient to reprogram differentiated cells to an embryonic-like state designated iPS (induced pluripotent stem) cells. iPS cells exhibit the morphology and growth properties of ES cells and express ES cell marker genes.</text>
</comment>
<comment type="miscellaneous">
    <text evidence="43">Alternative translation initiation from an upstream, in-frame non-ATG (CTG) codon or a downstream ATG start site results in the production of 2 isoforms with distinct N-termini, shown in this entry as isoforms 2/3 and isoform 1, respectively.</text>
</comment>
<comment type="miscellaneous">
    <molecule>Isoform 2</molecule>
    <text evidence="43">Produced by alternative translation initiation from a CTG codon, which is translated as Met.</text>
</comment>
<comment type="miscellaneous">
    <molecule>Isoform 3</molecule>
    <text evidence="43">Produced by alternative translation initiation from a CTG codon, which is translated as Met, and alternative splicing.</text>
</comment>
<comment type="online information" name="Atlas of Genetics and Cytogenetics in Oncology and Haematology">
    <link uri="https://atlasgeneticsoncology.org/gene/27/MYC"/>
</comment>
<comment type="online information" name="Wikipedia">
    <link uri="https://en.wikipedia.org/wiki/Myc"/>
    <text>Myc entry</text>
</comment>
<protein>
    <recommendedName>
        <fullName>Myc proto-oncogene protein</fullName>
    </recommendedName>
    <alternativeName>
        <fullName>Class E basic helix-loop-helix protein 39</fullName>
        <shortName>bHLHe39</shortName>
    </alternativeName>
    <alternativeName>
        <fullName>Proto-oncogene c-Myc</fullName>
    </alternativeName>
    <alternativeName>
        <fullName>Transcription factor p64</fullName>
    </alternativeName>
</protein>
<organism>
    <name type="scientific">Homo sapiens</name>
    <name type="common">Human</name>
    <dbReference type="NCBI Taxonomy" id="9606"/>
    <lineage>
        <taxon>Eukaryota</taxon>
        <taxon>Metazoa</taxon>
        <taxon>Chordata</taxon>
        <taxon>Craniata</taxon>
        <taxon>Vertebrata</taxon>
        <taxon>Euteleostomi</taxon>
        <taxon>Mammalia</taxon>
        <taxon>Eutheria</taxon>
        <taxon>Euarchontoglires</taxon>
        <taxon>Primates</taxon>
        <taxon>Haplorrhini</taxon>
        <taxon>Catarrhini</taxon>
        <taxon>Hominidae</taxon>
        <taxon>Homo</taxon>
    </lineage>
</organism>
<keyword id="KW-0002">3D-structure</keyword>
<keyword id="KW-0007">Acetylation</keyword>
<keyword id="KW-0010">Activator</keyword>
<keyword id="KW-0024">Alternative initiation</keyword>
<keyword id="KW-0025">Alternative splicing</keyword>
<keyword id="KW-0160">Chromosomal rearrangement</keyword>
<keyword id="KW-0158">Chromosome</keyword>
<keyword id="KW-0963">Cytoplasm</keyword>
<keyword id="KW-0238">DNA-binding</keyword>
<keyword id="KW-0325">Glycoprotein</keyword>
<keyword id="KW-1017">Isopeptide bond</keyword>
<keyword id="KW-0539">Nucleus</keyword>
<keyword id="KW-0597">Phosphoprotein</keyword>
<keyword id="KW-1267">Proteomics identification</keyword>
<keyword id="KW-0656">Proto-oncogene</keyword>
<keyword id="KW-1185">Reference proteome</keyword>
<keyword id="KW-0804">Transcription</keyword>
<keyword id="KW-0805">Transcription regulation</keyword>
<keyword id="KW-0832">Ubl conjugation</keyword>
<name>MYC_HUMAN</name>
<dbReference type="EMBL" id="L00058">
    <property type="protein sequence ID" value="AAA59882.1"/>
    <property type="molecule type" value="Genomic_DNA"/>
</dbReference>
<dbReference type="EMBL" id="L00057">
    <property type="protein sequence ID" value="AAA59882.1"/>
    <property type="status" value="JOINED"/>
    <property type="molecule type" value="Genomic_DNA"/>
</dbReference>
<dbReference type="EMBL" id="K00535">
    <property type="protein sequence ID" value="AAA59880.1"/>
    <property type="molecule type" value="Genomic_DNA"/>
</dbReference>
<dbReference type="EMBL" id="K00534">
    <property type="protein sequence ID" value="AAA59880.1"/>
    <property type="status" value="JOINED"/>
    <property type="molecule type" value="Genomic_DNA"/>
</dbReference>
<dbReference type="EMBL" id="K00535">
    <property type="protein sequence ID" value="ABW69847.1"/>
    <property type="molecule type" value="Genomic_DNA"/>
</dbReference>
<dbReference type="EMBL" id="K00534">
    <property type="protein sequence ID" value="ABW69847.1"/>
    <property type="status" value="JOINED"/>
    <property type="molecule type" value="Genomic_DNA"/>
</dbReference>
<dbReference type="EMBL" id="X00196">
    <property type="protein sequence ID" value="CAA25015.2"/>
    <property type="molecule type" value="Genomic_DNA"/>
</dbReference>
<dbReference type="EMBL" id="X00198">
    <property type="protein sequence ID" value="CAA25015.2"/>
    <property type="status" value="JOINED"/>
    <property type="molecule type" value="Genomic_DNA"/>
</dbReference>
<dbReference type="EMBL" id="X00364">
    <property type="protein sequence ID" value="CAA25106.1"/>
    <property type="molecule type" value="Genomic_DNA"/>
</dbReference>
<dbReference type="EMBL" id="V00568">
    <property type="protein sequence ID" value="CAA23831.1"/>
    <property type="molecule type" value="mRNA"/>
</dbReference>
<dbReference type="EMBL" id="K01906">
    <property type="protein sequence ID" value="AAA59881.1"/>
    <property type="molecule type" value="Genomic_DNA"/>
</dbReference>
<dbReference type="EMBL" id="K01905">
    <property type="protein sequence ID" value="AAA59881.1"/>
    <property type="status" value="JOINED"/>
    <property type="molecule type" value="Genomic_DNA"/>
</dbReference>
<dbReference type="EMBL" id="K02276">
    <property type="protein sequence ID" value="AAA36340.1"/>
    <property type="molecule type" value="mRNA"/>
</dbReference>
<dbReference type="EMBL" id="X00676">
    <property type="protein sequence ID" value="CAA25288.1"/>
    <property type="molecule type" value="Genomic_DNA"/>
</dbReference>
<dbReference type="EMBL" id="D10493">
    <property type="protein sequence ID" value="BAA01374.2"/>
    <property type="molecule type" value="Genomic_DNA"/>
</dbReference>
<dbReference type="EMBL" id="D10493">
    <property type="protein sequence ID" value="BAA01375.1"/>
    <property type="molecule type" value="Genomic_DNA"/>
</dbReference>
<dbReference type="EMBL" id="BT019768">
    <property type="protein sequence ID" value="AAV38573.1"/>
    <property type="molecule type" value="mRNA"/>
</dbReference>
<dbReference type="EMBL" id="AY214166">
    <property type="protein sequence ID" value="AAO21131.1"/>
    <property type="molecule type" value="Genomic_DNA"/>
</dbReference>
<dbReference type="EMBL" id="AK312883">
    <property type="protein sequence ID" value="BAG35731.1"/>
    <property type="molecule type" value="mRNA"/>
</dbReference>
<dbReference type="EMBL" id="AC103819">
    <property type="status" value="NOT_ANNOTATED_CDS"/>
    <property type="molecule type" value="Genomic_DNA"/>
</dbReference>
<dbReference type="EMBL" id="CH471060">
    <property type="protein sequence ID" value="EAW92098.1"/>
    <property type="molecule type" value="Genomic_DNA"/>
</dbReference>
<dbReference type="EMBL" id="CH471060">
    <property type="protein sequence ID" value="EAW92100.1"/>
    <property type="molecule type" value="Genomic_DNA"/>
</dbReference>
<dbReference type="EMBL" id="CH471060">
    <property type="protein sequence ID" value="EAW92101.1"/>
    <property type="molecule type" value="Genomic_DNA"/>
</dbReference>
<dbReference type="EMBL" id="BC000141">
    <property type="protein sequence ID" value="AAH00141.2"/>
    <property type="molecule type" value="mRNA"/>
</dbReference>
<dbReference type="EMBL" id="BC000917">
    <property type="protein sequence ID" value="AAH00917.2"/>
    <property type="molecule type" value="mRNA"/>
</dbReference>
<dbReference type="EMBL" id="BC058901">
    <property type="protein sequence ID" value="AAH58901.2"/>
    <property type="molecule type" value="mRNA"/>
</dbReference>
<dbReference type="EMBL" id="M13929">
    <property type="protein sequence ID" value="AAA88092.1"/>
    <property type="molecule type" value="mRNA"/>
</dbReference>
<dbReference type="CCDS" id="CCDS6359.2">
    <molecule id="P01106-2"/>
</dbReference>
<dbReference type="CCDS" id="CCDS87627.1">
    <molecule id="P01106-3"/>
</dbReference>
<dbReference type="PIR" id="A01349">
    <property type="entry name" value="TVHUM"/>
</dbReference>
<dbReference type="PIR" id="A01350">
    <property type="entry name" value="TVHUT"/>
</dbReference>
<dbReference type="RefSeq" id="NP_001341799.1">
    <molecule id="P01106-3"/>
    <property type="nucleotide sequence ID" value="NM_001354870.1"/>
</dbReference>
<dbReference type="RefSeq" id="NP_002458.2">
    <molecule id="P01106-2"/>
    <property type="nucleotide sequence ID" value="NM_002467.6"/>
</dbReference>
<dbReference type="PDB" id="1A93">
    <property type="method" value="NMR"/>
    <property type="chains" value="A=421-449"/>
</dbReference>
<dbReference type="PDB" id="1EE4">
    <property type="method" value="X-ray"/>
    <property type="resolution" value="2.10 A"/>
    <property type="chains" value="C/D/E/F=335-343"/>
</dbReference>
<dbReference type="PDB" id="1MV0">
    <property type="method" value="NMR"/>
    <property type="chains" value="A=70-83"/>
</dbReference>
<dbReference type="PDB" id="1NKP">
    <property type="method" value="X-ray"/>
    <property type="resolution" value="1.80 A"/>
    <property type="chains" value="A/D=368-449"/>
</dbReference>
<dbReference type="PDB" id="2A93">
    <property type="method" value="NMR"/>
    <property type="chains" value="A=421-449"/>
</dbReference>
<dbReference type="PDB" id="2OR9">
    <property type="method" value="X-ray"/>
    <property type="resolution" value="2.70 A"/>
    <property type="chains" value="P=425-434"/>
</dbReference>
<dbReference type="PDB" id="4Y7R">
    <property type="method" value="X-ray"/>
    <property type="resolution" value="1.90 A"/>
    <property type="chains" value="B=275-282"/>
</dbReference>
<dbReference type="PDB" id="5I4Z">
    <property type="method" value="X-ray"/>
    <property type="resolution" value="1.95 A"/>
    <property type="chains" value="A/B=365-454"/>
</dbReference>
<dbReference type="PDB" id="5I50">
    <property type="method" value="X-ray"/>
    <property type="resolution" value="2.70 A"/>
    <property type="chains" value="A/B=365-454"/>
</dbReference>
<dbReference type="PDB" id="6C4U">
    <property type="method" value="X-ray"/>
    <property type="resolution" value="2.60 A"/>
    <property type="chains" value="G/H/I/J/K/L=69-77"/>
</dbReference>
<dbReference type="PDB" id="6E16">
    <property type="method" value="X-ray"/>
    <property type="resolution" value="2.40 A"/>
    <property type="chains" value="A=111-140"/>
</dbReference>
<dbReference type="PDB" id="6E24">
    <property type="method" value="X-ray"/>
    <property type="resolution" value="3.00 A"/>
    <property type="chains" value="A=111-140"/>
</dbReference>
<dbReference type="PDB" id="6G6J">
    <property type="method" value="X-ray"/>
    <property type="resolution" value="2.25 A"/>
    <property type="chains" value="A/C=366-452"/>
</dbReference>
<dbReference type="PDB" id="6G6K">
    <property type="method" value="X-ray"/>
    <property type="resolution" value="1.35 A"/>
    <property type="chains" value="A/C=366-452"/>
</dbReference>
<dbReference type="PDB" id="6G6L">
    <property type="method" value="X-ray"/>
    <property type="resolution" value="2.20 A"/>
    <property type="chains" value="A/C/E/G=366-452"/>
</dbReference>
<dbReference type="PDB" id="7T1Y">
    <property type="method" value="X-ray"/>
    <property type="resolution" value="2.55 A"/>
    <property type="chains" value="C=250-280"/>
</dbReference>
<dbReference type="PDB" id="7T1Z">
    <property type="method" value="X-ray"/>
    <property type="resolution" value="2.77 A"/>
    <property type="chains" value="C=62-81"/>
</dbReference>
<dbReference type="PDB" id="8J2Q">
    <property type="method" value="X-ray"/>
    <property type="resolution" value="1.92 A"/>
    <property type="chains" value="A=417-427"/>
</dbReference>
<dbReference type="PDB" id="8OTS">
    <property type="method" value="EM"/>
    <property type="resolution" value="3.30 A"/>
    <property type="chains" value="M=351-437"/>
</dbReference>
<dbReference type="PDB" id="8OTT">
    <property type="method" value="EM"/>
    <property type="resolution" value="3.30 A"/>
    <property type="chains" value="M=353-405"/>
</dbReference>
<dbReference type="PDB" id="8Q1N">
    <property type="method" value="X-ray"/>
    <property type="resolution" value="1.84 A"/>
    <property type="chains" value="a/b=273-283"/>
</dbReference>
<dbReference type="PDB" id="8WLG">
    <property type="method" value="X-ray"/>
    <property type="resolution" value="2.55 A"/>
    <property type="chains" value="A=417-426"/>
</dbReference>
<dbReference type="PDB" id="8X8S">
    <property type="method" value="X-ray"/>
    <property type="resolution" value="2.04 A"/>
    <property type="chains" value="A=417-427"/>
</dbReference>
<dbReference type="PDB" id="8X8V">
    <property type="method" value="X-ray"/>
    <property type="resolution" value="2.00 A"/>
    <property type="chains" value="A=417-427"/>
</dbReference>
<dbReference type="PDBsum" id="1A93"/>
<dbReference type="PDBsum" id="1EE4"/>
<dbReference type="PDBsum" id="1MV0"/>
<dbReference type="PDBsum" id="1NKP"/>
<dbReference type="PDBsum" id="2A93"/>
<dbReference type="PDBsum" id="2OR9"/>
<dbReference type="PDBsum" id="4Y7R"/>
<dbReference type="PDBsum" id="5I4Z"/>
<dbReference type="PDBsum" id="5I50"/>
<dbReference type="PDBsum" id="6C4U"/>
<dbReference type="PDBsum" id="6E16"/>
<dbReference type="PDBsum" id="6E24"/>
<dbReference type="PDBsum" id="6G6J"/>
<dbReference type="PDBsum" id="6G6K"/>
<dbReference type="PDBsum" id="6G6L"/>
<dbReference type="PDBsum" id="7T1Y"/>
<dbReference type="PDBsum" id="7T1Z"/>
<dbReference type="PDBsum" id="8J2Q"/>
<dbReference type="PDBsum" id="8OTS"/>
<dbReference type="PDBsum" id="8OTT"/>
<dbReference type="PDBsum" id="8Q1N"/>
<dbReference type="PDBsum" id="8WLG"/>
<dbReference type="PDBsum" id="8X8S"/>
<dbReference type="PDBsum" id="8X8V"/>
<dbReference type="BMRB" id="P01106"/>
<dbReference type="EMDB" id="EMD-17159"/>
<dbReference type="EMDB" id="EMD-17183"/>
<dbReference type="EMDB" id="EMD-17184"/>
<dbReference type="SMR" id="P01106"/>
<dbReference type="BioGRID" id="110694">
    <property type="interactions" value="3075"/>
</dbReference>
<dbReference type="ComplexPortal" id="CPX-1123">
    <property type="entry name" value="FOXO3-MYC complex"/>
</dbReference>
<dbReference type="ComplexPortal" id="CPX-514">
    <property type="entry name" value="c-MYC-BIN1 complex"/>
</dbReference>
<dbReference type="ComplexPortal" id="CPX-91">
    <property type="entry name" value="MYC-MAX transcriptional activator complex"/>
</dbReference>
<dbReference type="CORUM" id="P01106"/>
<dbReference type="DIP" id="DIP-28143N"/>
<dbReference type="FunCoup" id="P01106">
    <property type="interactions" value="3942"/>
</dbReference>
<dbReference type="IntAct" id="P01106">
    <property type="interactions" value="843"/>
</dbReference>
<dbReference type="MINT" id="P01106"/>
<dbReference type="STRING" id="9606.ENSP00000478887"/>
<dbReference type="BindingDB" id="P01106"/>
<dbReference type="ChEMBL" id="CHEMBL1250348"/>
<dbReference type="DrugBank" id="DB00945">
    <property type="generic name" value="Acetylsalicylic acid"/>
</dbReference>
<dbReference type="DrugBank" id="DB01093">
    <property type="generic name" value="Dimethyl sulfoxide"/>
</dbReference>
<dbReference type="DrugBank" id="DB03756">
    <property type="generic name" value="Doconexent"/>
</dbReference>
<dbReference type="DrugBank" id="DB08813">
    <property type="generic name" value="Nadroparin"/>
</dbReference>
<dbReference type="GlyConnect" id="426">
    <property type="glycosylation" value="1 O-GlcNAc glycan (1 site)"/>
</dbReference>
<dbReference type="GlyCosmos" id="P01106">
    <property type="glycosylation" value="1 site, 1 glycan"/>
</dbReference>
<dbReference type="GlyGen" id="P01106">
    <property type="glycosylation" value="3 sites, 1 O-linked glycan (1 site)"/>
</dbReference>
<dbReference type="iPTMnet" id="P01106"/>
<dbReference type="PhosphoSitePlus" id="P01106"/>
<dbReference type="BioMuta" id="MYC"/>
<dbReference type="DMDM" id="127619"/>
<dbReference type="jPOST" id="P01106"/>
<dbReference type="MassIVE" id="P01106"/>
<dbReference type="PaxDb" id="9606-ENSP00000479618"/>
<dbReference type="PeptideAtlas" id="P01106"/>
<dbReference type="ProteomicsDB" id="36826"/>
<dbReference type="ProteomicsDB" id="51318">
    <molecule id="P01106-1"/>
</dbReference>
<dbReference type="ProteomicsDB" id="51319">
    <molecule id="P01106-2"/>
</dbReference>
<dbReference type="Pumba" id="P01106"/>
<dbReference type="ABCD" id="P01106">
    <property type="antibodies" value="7 sequenced antibodies"/>
</dbReference>
<dbReference type="Antibodypedia" id="3520">
    <property type="antibodies" value="4268 antibodies from 54 providers"/>
</dbReference>
<dbReference type="DNASU" id="4609"/>
<dbReference type="Ensembl" id="ENST00000377970.6">
    <molecule id="P01106-1"/>
    <property type="protein sequence ID" value="ENSP00000367207.3"/>
    <property type="gene ID" value="ENSG00000136997.22"/>
</dbReference>
<dbReference type="Ensembl" id="ENST00000524013.2">
    <molecule id="P01106-3"/>
    <property type="protein sequence ID" value="ENSP00000430235.2"/>
    <property type="gene ID" value="ENSG00000136997.22"/>
</dbReference>
<dbReference type="Ensembl" id="ENST00000621592.8">
    <molecule id="P01106-2"/>
    <property type="protein sequence ID" value="ENSP00000478887.2"/>
    <property type="gene ID" value="ENSG00000136997.22"/>
</dbReference>
<dbReference type="Ensembl" id="ENST00000652288.1">
    <molecule id="P01106-1"/>
    <property type="protein sequence ID" value="ENSP00000499105.1"/>
    <property type="gene ID" value="ENSG00000136997.22"/>
</dbReference>
<dbReference type="Ensembl" id="ENST00000707113.1">
    <molecule id="P01106-1"/>
    <property type="protein sequence ID" value="ENSP00000516742.1"/>
    <property type="gene ID" value="ENSG00000136997.22"/>
</dbReference>
<dbReference type="Ensembl" id="ENST00000707114.1">
    <molecule id="P01106-1"/>
    <property type="protein sequence ID" value="ENSP00000516743.1"/>
    <property type="gene ID" value="ENSG00000136997.22"/>
</dbReference>
<dbReference type="Ensembl" id="ENST00000707115.1">
    <molecule id="P01106-1"/>
    <property type="protein sequence ID" value="ENSP00000516744.1"/>
    <property type="gene ID" value="ENSG00000136997.22"/>
</dbReference>
<dbReference type="Ensembl" id="ENST00000707116.1">
    <molecule id="P01106-1"/>
    <property type="protein sequence ID" value="ENSP00000516745.1"/>
    <property type="gene ID" value="ENSG00000136997.22"/>
</dbReference>
<dbReference type="GeneID" id="4609"/>
<dbReference type="KEGG" id="hsa:4609"/>
<dbReference type="MANE-Select" id="ENST00000621592.8">
    <property type="protein sequence ID" value="ENSP00000478887.2"/>
    <property type="RefSeq nucleotide sequence ID" value="NM_002467.6"/>
    <property type="RefSeq protein sequence ID" value="NP_002458.2"/>
</dbReference>
<dbReference type="UCSC" id="uc064qdj.1">
    <molecule id="P01106-2"/>
    <property type="organism name" value="human"/>
</dbReference>
<dbReference type="AGR" id="HGNC:7553"/>
<dbReference type="CTD" id="4609"/>
<dbReference type="DisGeNET" id="4609"/>
<dbReference type="GeneCards" id="MYC"/>
<dbReference type="HGNC" id="HGNC:7553">
    <property type="gene designation" value="MYC"/>
</dbReference>
<dbReference type="HPA" id="ENSG00000136997">
    <property type="expression patterns" value="Tissue enhanced (adipose tissue, skin)"/>
</dbReference>
<dbReference type="MalaCards" id="MYC"/>
<dbReference type="MIM" id="113970">
    <property type="type" value="phenotype"/>
</dbReference>
<dbReference type="MIM" id="190080">
    <property type="type" value="gene"/>
</dbReference>
<dbReference type="neXtProt" id="NX_P01106"/>
<dbReference type="OpenTargets" id="ENSG00000136997"/>
<dbReference type="Orphanet" id="543">
    <property type="disease" value="Burkitt lymphoma"/>
</dbReference>
<dbReference type="Orphanet" id="480541">
    <property type="disease" value="High grade B-cell lymphoma with MYC and/ or BCL2 and/or BCL6 rearrangement"/>
</dbReference>
<dbReference type="Orphanet" id="99861">
    <property type="disease" value="Precursor T-cell acute lymphoblastic leukemia"/>
</dbReference>
<dbReference type="PharmGKB" id="PA31353"/>
<dbReference type="VEuPathDB" id="HostDB:ENSG00000136997"/>
<dbReference type="eggNOG" id="KOG2483">
    <property type="taxonomic scope" value="Eukaryota"/>
</dbReference>
<dbReference type="GeneTree" id="ENSGT00940000155285"/>
<dbReference type="HOGENOM" id="CLU_052560_0_0_1"/>
<dbReference type="InParanoid" id="P01106"/>
<dbReference type="OMA" id="FPYPLHD"/>
<dbReference type="OrthoDB" id="5964374at2759"/>
<dbReference type="PAN-GO" id="P01106">
    <property type="GO annotations" value="4 GO annotations based on evolutionary models"/>
</dbReference>
<dbReference type="PhylomeDB" id="P01106"/>
<dbReference type="TreeFam" id="TF106001"/>
<dbReference type="BioCyc" id="MetaCyc:ENSG00000136997-MONOMER"/>
<dbReference type="PathwayCommons" id="P01106"/>
<dbReference type="Reactome" id="R-HSA-1362277">
    <property type="pathway name" value="Transcription of E2F targets under negative control by DREAM complex"/>
</dbReference>
<dbReference type="Reactome" id="R-HSA-201556">
    <property type="pathway name" value="Signaling by ALK"/>
</dbReference>
<dbReference type="Reactome" id="R-HSA-2122947">
    <property type="pathway name" value="NOTCH1 Intracellular Domain Regulates Transcription"/>
</dbReference>
<dbReference type="Reactome" id="R-HSA-2173796">
    <property type="pathway name" value="SMAD2/SMAD3:SMAD4 heterotrimer regulates transcription"/>
</dbReference>
<dbReference type="Reactome" id="R-HSA-2644606">
    <property type="pathway name" value="Constitutive Signaling by NOTCH1 PEST Domain Mutants"/>
</dbReference>
<dbReference type="Reactome" id="R-HSA-2894862">
    <property type="pathway name" value="Constitutive Signaling by NOTCH1 HD+PEST Domain Mutants"/>
</dbReference>
<dbReference type="Reactome" id="R-HSA-4411364">
    <property type="pathway name" value="Binding of TCF/LEF:CTNNB1 to target gene promoters"/>
</dbReference>
<dbReference type="Reactome" id="R-HSA-5687128">
    <property type="pathway name" value="MAPK6/MAPK4 signaling"/>
</dbReference>
<dbReference type="Reactome" id="R-HSA-5689880">
    <property type="pathway name" value="Ub-specific processing proteases"/>
</dbReference>
<dbReference type="Reactome" id="R-HSA-6785807">
    <property type="pathway name" value="Interleukin-4 and Interleukin-13 signaling"/>
</dbReference>
<dbReference type="Reactome" id="R-HSA-69202">
    <property type="pathway name" value="Cyclin E associated events during G1/S transition"/>
</dbReference>
<dbReference type="Reactome" id="R-HSA-69656">
    <property type="pathway name" value="Cyclin A:Cdk2-associated events at S phase entry"/>
</dbReference>
<dbReference type="Reactome" id="R-HSA-8866911">
    <property type="pathway name" value="TFAP2 (AP-2) family regulates transcription of cell cycle factors"/>
</dbReference>
<dbReference type="Reactome" id="R-HSA-8951430">
    <property type="pathway name" value="RUNX3 regulates WNT signaling"/>
</dbReference>
<dbReference type="Reactome" id="R-HSA-9018519">
    <property type="pathway name" value="Estrogen-dependent gene expression"/>
</dbReference>
<dbReference type="Reactome" id="R-HSA-9616222">
    <property type="pathway name" value="Transcriptional regulation of granulopoiesis"/>
</dbReference>
<dbReference type="Reactome" id="R-HSA-9818749">
    <property type="pathway name" value="Regulation of NFE2L2 gene expression"/>
</dbReference>
<dbReference type="SignaLink" id="P01106"/>
<dbReference type="SIGNOR" id="P01106"/>
<dbReference type="BioGRID-ORCS" id="4609">
    <property type="hits" value="858 hits in 1206 CRISPR screens"/>
</dbReference>
<dbReference type="CD-CODE" id="02CD31EB">
    <property type="entry name" value="Synthetic Condensate 000174"/>
</dbReference>
<dbReference type="CD-CODE" id="91857CE7">
    <property type="entry name" value="Nucleolus"/>
</dbReference>
<dbReference type="CD-CODE" id="BADFB975">
    <property type="entry name" value="Synthetic Condensate 000187"/>
</dbReference>
<dbReference type="ChiTaRS" id="MYC">
    <property type="organism name" value="human"/>
</dbReference>
<dbReference type="EvolutionaryTrace" id="P01106"/>
<dbReference type="GeneWiki" id="Myc"/>
<dbReference type="GenomeRNAi" id="4609"/>
<dbReference type="Pharos" id="P01106">
    <property type="development level" value="Tchem"/>
</dbReference>
<dbReference type="PRO" id="PR:P01106"/>
<dbReference type="Proteomes" id="UP000005640">
    <property type="component" value="Chromosome 8"/>
</dbReference>
<dbReference type="RNAct" id="P01106">
    <property type="molecule type" value="protein"/>
</dbReference>
<dbReference type="Bgee" id="ENSG00000136997">
    <property type="expression patterns" value="Expressed in upper leg skin and 182 other cell types or tissues"/>
</dbReference>
<dbReference type="ExpressionAtlas" id="P01106">
    <property type="expression patterns" value="baseline and differential"/>
</dbReference>
<dbReference type="GO" id="GO:0030424">
    <property type="term" value="C:axon"/>
    <property type="evidence" value="ECO:0007669"/>
    <property type="project" value="Ensembl"/>
</dbReference>
<dbReference type="GO" id="GO:0000785">
    <property type="term" value="C:chromatin"/>
    <property type="evidence" value="ECO:0000314"/>
    <property type="project" value="UniProtKB"/>
</dbReference>
<dbReference type="GO" id="GO:0000791">
    <property type="term" value="C:euchromatin"/>
    <property type="evidence" value="ECO:0007669"/>
    <property type="project" value="Ensembl"/>
</dbReference>
<dbReference type="GO" id="GO:0071943">
    <property type="term" value="C:Myc-Max complex"/>
    <property type="evidence" value="ECO:0000353"/>
    <property type="project" value="ComplexPortal"/>
</dbReference>
<dbReference type="GO" id="GO:0016604">
    <property type="term" value="C:nuclear body"/>
    <property type="evidence" value="ECO:0007669"/>
    <property type="project" value="Ensembl"/>
</dbReference>
<dbReference type="GO" id="GO:0005730">
    <property type="term" value="C:nucleolus"/>
    <property type="evidence" value="ECO:0000314"/>
    <property type="project" value="UniProtKB"/>
</dbReference>
<dbReference type="GO" id="GO:0005654">
    <property type="term" value="C:nucleoplasm"/>
    <property type="evidence" value="ECO:0000314"/>
    <property type="project" value="HPA"/>
</dbReference>
<dbReference type="GO" id="GO:0005634">
    <property type="term" value="C:nucleus"/>
    <property type="evidence" value="ECO:0000314"/>
    <property type="project" value="UniProtKB"/>
</dbReference>
<dbReference type="GO" id="GO:0048471">
    <property type="term" value="C:perinuclear region of cytoplasm"/>
    <property type="evidence" value="ECO:0007669"/>
    <property type="project" value="Ensembl"/>
</dbReference>
<dbReference type="GO" id="GO:0032991">
    <property type="term" value="C:protein-containing complex"/>
    <property type="evidence" value="ECO:0000314"/>
    <property type="project" value="UniProtKB"/>
</dbReference>
<dbReference type="GO" id="GO:0090571">
    <property type="term" value="C:RNA polymerase II transcription repressor complex"/>
    <property type="evidence" value="ECO:0000353"/>
    <property type="project" value="ComplexPortal"/>
</dbReference>
<dbReference type="GO" id="GO:0005819">
    <property type="term" value="C:spindle"/>
    <property type="evidence" value="ECO:0007669"/>
    <property type="project" value="Ensembl"/>
</dbReference>
<dbReference type="GO" id="GO:0001046">
    <property type="term" value="F:core promoter sequence-specific DNA binding"/>
    <property type="evidence" value="ECO:0000314"/>
    <property type="project" value="ARUK-UCL"/>
</dbReference>
<dbReference type="GO" id="GO:0003677">
    <property type="term" value="F:DNA binding"/>
    <property type="evidence" value="ECO:0000250"/>
    <property type="project" value="UniProtKB"/>
</dbReference>
<dbReference type="GO" id="GO:0001228">
    <property type="term" value="F:DNA-binding transcription activator activity, RNA polymerase II-specific"/>
    <property type="evidence" value="ECO:0000314"/>
    <property type="project" value="NTNU_SB"/>
</dbReference>
<dbReference type="GO" id="GO:0000981">
    <property type="term" value="F:DNA-binding transcription factor activity, RNA polymerase II-specific"/>
    <property type="evidence" value="ECO:0000314"/>
    <property type="project" value="UniProtKB"/>
</dbReference>
<dbReference type="GO" id="GO:0140297">
    <property type="term" value="F:DNA-binding transcription factor binding"/>
    <property type="evidence" value="ECO:0000353"/>
    <property type="project" value="UniProtKB"/>
</dbReference>
<dbReference type="GO" id="GO:0001227">
    <property type="term" value="F:DNA-binding transcription repressor activity, RNA polymerase II-specific"/>
    <property type="evidence" value="ECO:0000314"/>
    <property type="project" value="UniProt"/>
</dbReference>
<dbReference type="GO" id="GO:0070888">
    <property type="term" value="F:E-box binding"/>
    <property type="evidence" value="ECO:0000314"/>
    <property type="project" value="UniProtKB"/>
</dbReference>
<dbReference type="GO" id="GO:0042802">
    <property type="term" value="F:identical protein binding"/>
    <property type="evidence" value="ECO:0000353"/>
    <property type="project" value="IntAct"/>
</dbReference>
<dbReference type="GO" id="GO:0046983">
    <property type="term" value="F:protein dimerization activity"/>
    <property type="evidence" value="ECO:0007669"/>
    <property type="project" value="InterPro"/>
</dbReference>
<dbReference type="GO" id="GO:0044877">
    <property type="term" value="F:protein-containing complex binding"/>
    <property type="evidence" value="ECO:0000314"/>
    <property type="project" value="UniProtKB"/>
</dbReference>
<dbReference type="GO" id="GO:0000978">
    <property type="term" value="F:RNA polymerase II cis-regulatory region sequence-specific DNA binding"/>
    <property type="evidence" value="ECO:0000314"/>
    <property type="project" value="NTNU_SB"/>
</dbReference>
<dbReference type="GO" id="GO:1905761">
    <property type="term" value="F:SCF ubiquitin ligase complex binding"/>
    <property type="evidence" value="ECO:0000353"/>
    <property type="project" value="DisProt"/>
</dbReference>
<dbReference type="GO" id="GO:0001221">
    <property type="term" value="F:transcription coregulator binding"/>
    <property type="evidence" value="ECO:0000353"/>
    <property type="project" value="UniProtKB"/>
</dbReference>
<dbReference type="GO" id="GO:0140537">
    <property type="term" value="F:transcription regulator activator activity"/>
    <property type="evidence" value="ECO:0000270"/>
    <property type="project" value="DisProt"/>
</dbReference>
<dbReference type="GO" id="GO:0031625">
    <property type="term" value="F:ubiquitin protein ligase binding"/>
    <property type="evidence" value="ECO:0007669"/>
    <property type="project" value="Ensembl"/>
</dbReference>
<dbReference type="GO" id="GO:1990863">
    <property type="term" value="P:acinar cell proliferation"/>
    <property type="evidence" value="ECO:0007669"/>
    <property type="project" value="Ensembl"/>
</dbReference>
<dbReference type="GO" id="GO:0001783">
    <property type="term" value="P:B cell apoptotic process"/>
    <property type="evidence" value="ECO:0007669"/>
    <property type="project" value="Ensembl"/>
</dbReference>
<dbReference type="GO" id="GO:0001658">
    <property type="term" value="P:branching involved in ureteric bud morphogenesis"/>
    <property type="evidence" value="ECO:0000250"/>
    <property type="project" value="UniProtKB"/>
</dbReference>
<dbReference type="GO" id="GO:0071456">
    <property type="term" value="P:cellular response to hypoxia"/>
    <property type="evidence" value="ECO:0000314"/>
    <property type="project" value="CAFA"/>
</dbReference>
<dbReference type="GO" id="GO:0035457">
    <property type="term" value="P:cellular response to interferon-alpha"/>
    <property type="evidence" value="ECO:0007669"/>
    <property type="project" value="Ensembl"/>
</dbReference>
<dbReference type="GO" id="GO:0034644">
    <property type="term" value="P:cellular response to UV"/>
    <property type="evidence" value="ECO:0000270"/>
    <property type="project" value="UniProtKB"/>
</dbReference>
<dbReference type="GO" id="GO:0071466">
    <property type="term" value="P:cellular response to xenobiotic stimulus"/>
    <property type="evidence" value="ECO:0000314"/>
    <property type="project" value="UniProtKB"/>
</dbReference>
<dbReference type="GO" id="GO:0006338">
    <property type="term" value="P:chromatin remodeling"/>
    <property type="evidence" value="ECO:0000314"/>
    <property type="project" value="UniProtKB"/>
</dbReference>
<dbReference type="GO" id="GO:0051276">
    <property type="term" value="P:chromosome organization"/>
    <property type="evidence" value="ECO:0000314"/>
    <property type="project" value="UniProtKB"/>
</dbReference>
<dbReference type="GO" id="GO:0050910">
    <property type="term" value="P:detection of mechanical stimulus involved in sensory perception of sound"/>
    <property type="evidence" value="ECO:0007669"/>
    <property type="project" value="Ensembl"/>
</dbReference>
<dbReference type="GO" id="GO:0006974">
    <property type="term" value="P:DNA damage response"/>
    <property type="evidence" value="ECO:0000314"/>
    <property type="project" value="UniProtKB"/>
</dbReference>
<dbReference type="GO" id="GO:0070371">
    <property type="term" value="P:ERK1 and ERK2 cascade"/>
    <property type="evidence" value="ECO:0000314"/>
    <property type="project" value="CAFA"/>
</dbReference>
<dbReference type="GO" id="GO:0044346">
    <property type="term" value="P:fibroblast apoptotic process"/>
    <property type="evidence" value="ECO:0000304"/>
    <property type="project" value="UniProtKB"/>
</dbReference>
<dbReference type="GO" id="GO:0000082">
    <property type="term" value="P:G1/S transition of mitotic cell cycle"/>
    <property type="evidence" value="ECO:0000314"/>
    <property type="project" value="UniProtKB"/>
</dbReference>
<dbReference type="GO" id="GO:0006879">
    <property type="term" value="P:intracellular iron ion homeostasis"/>
    <property type="evidence" value="ECO:0000314"/>
    <property type="project" value="UniProtKB"/>
</dbReference>
<dbReference type="GO" id="GO:0008630">
    <property type="term" value="P:intrinsic apoptotic signaling pathway in response to DNA damage"/>
    <property type="evidence" value="ECO:0007669"/>
    <property type="project" value="Ensembl"/>
</dbReference>
<dbReference type="GO" id="GO:0000165">
    <property type="term" value="P:MAPK cascade"/>
    <property type="evidence" value="ECO:0000315"/>
    <property type="project" value="UniProtKB"/>
</dbReference>
<dbReference type="GO" id="GO:0042474">
    <property type="term" value="P:middle ear morphogenesis"/>
    <property type="evidence" value="ECO:0007669"/>
    <property type="project" value="Ensembl"/>
</dbReference>
<dbReference type="GO" id="GO:0014902">
    <property type="term" value="P:myotube differentiation"/>
    <property type="evidence" value="ECO:0007669"/>
    <property type="project" value="Ensembl"/>
</dbReference>
<dbReference type="GO" id="GO:0043066">
    <property type="term" value="P:negative regulation of apoptotic process"/>
    <property type="evidence" value="ECO:0000250"/>
    <property type="project" value="UniProtKB"/>
</dbReference>
<dbReference type="GO" id="GO:0051782">
    <property type="term" value="P:negative regulation of cell division"/>
    <property type="evidence" value="ECO:0000314"/>
    <property type="project" value="UniProtKB"/>
</dbReference>
<dbReference type="GO" id="GO:0048147">
    <property type="term" value="P:negative regulation of fibroblast proliferation"/>
    <property type="evidence" value="ECO:0000314"/>
    <property type="project" value="UniProtKB"/>
</dbReference>
<dbReference type="GO" id="GO:0044027">
    <property type="term" value="P:negative regulation of gene expression via chromosomal CpG island methylation"/>
    <property type="evidence" value="ECO:0000315"/>
    <property type="project" value="BHF-UCL"/>
</dbReference>
<dbReference type="GO" id="GO:0045656">
    <property type="term" value="P:negative regulation of monocyte differentiation"/>
    <property type="evidence" value="ECO:0000315"/>
    <property type="project" value="UniProtKB"/>
</dbReference>
<dbReference type="GO" id="GO:0032873">
    <property type="term" value="P:negative regulation of stress-activated MAPK cascade"/>
    <property type="evidence" value="ECO:0000250"/>
    <property type="project" value="UniProtKB"/>
</dbReference>
<dbReference type="GO" id="GO:0000122">
    <property type="term" value="P:negative regulation of transcription by RNA polymerase II"/>
    <property type="evidence" value="ECO:0000314"/>
    <property type="project" value="UniProtKB"/>
</dbReference>
<dbReference type="GO" id="GO:0060633">
    <property type="term" value="P:negative regulation of transcription initiation by RNA polymerase II"/>
    <property type="evidence" value="ECO:0000314"/>
    <property type="project" value="UniProt"/>
</dbReference>
<dbReference type="GO" id="GO:0001866">
    <property type="term" value="P:NK T cell proliferation"/>
    <property type="evidence" value="ECO:0007669"/>
    <property type="project" value="Ensembl"/>
</dbReference>
<dbReference type="GO" id="GO:0043473">
    <property type="term" value="P:pigmentation"/>
    <property type="evidence" value="ECO:0007669"/>
    <property type="project" value="Ensembl"/>
</dbReference>
<dbReference type="GO" id="GO:1904699">
    <property type="term" value="P:positive regulation of acinar cell proliferation"/>
    <property type="evidence" value="ECO:0007669"/>
    <property type="project" value="Ensembl"/>
</dbReference>
<dbReference type="GO" id="GO:0002904">
    <property type="term" value="P:positive regulation of B cell apoptotic process"/>
    <property type="evidence" value="ECO:0007669"/>
    <property type="project" value="Ensembl"/>
</dbReference>
<dbReference type="GO" id="GO:0008284">
    <property type="term" value="P:positive regulation of cell population proliferation"/>
    <property type="evidence" value="ECO:0000314"/>
    <property type="project" value="MGI"/>
</dbReference>
<dbReference type="GO" id="GO:0045893">
    <property type="term" value="P:positive regulation of DNA-templated transcription"/>
    <property type="evidence" value="ECO:0000314"/>
    <property type="project" value="UniProtKB"/>
</dbReference>
<dbReference type="GO" id="GO:0050679">
    <property type="term" value="P:positive regulation of epithelial cell proliferation"/>
    <property type="evidence" value="ECO:0000314"/>
    <property type="project" value="UniProtKB"/>
</dbReference>
<dbReference type="GO" id="GO:0048146">
    <property type="term" value="P:positive regulation of fibroblast proliferation"/>
    <property type="evidence" value="ECO:0000314"/>
    <property type="project" value="UniProtKB"/>
</dbReference>
<dbReference type="GO" id="GO:0010628">
    <property type="term" value="P:positive regulation of gene expression"/>
    <property type="evidence" value="ECO:0000314"/>
    <property type="project" value="CAFA"/>
</dbReference>
<dbReference type="GO" id="GO:1902255">
    <property type="term" value="P:positive regulation of intrinsic apoptotic signaling pathway by p53 class mediator"/>
    <property type="evidence" value="ECO:0000314"/>
    <property type="project" value="UniProtKB"/>
</dbReference>
<dbReference type="GO" id="GO:0002053">
    <property type="term" value="P:positive regulation of mesenchymal cell proliferation"/>
    <property type="evidence" value="ECO:0000250"/>
    <property type="project" value="UniProtKB"/>
</dbReference>
<dbReference type="GO" id="GO:0090096">
    <property type="term" value="P:positive regulation of metanephric cap mesenchymal cell proliferation"/>
    <property type="evidence" value="ECO:0000250"/>
    <property type="project" value="UniProtKB"/>
</dbReference>
<dbReference type="GO" id="GO:1902895">
    <property type="term" value="P:positive regulation of miRNA transcription"/>
    <property type="evidence" value="ECO:0000314"/>
    <property type="project" value="ARUK-UCL"/>
</dbReference>
<dbReference type="GO" id="GO:0032206">
    <property type="term" value="P:positive regulation of telomere maintenance"/>
    <property type="evidence" value="ECO:0000250"/>
    <property type="project" value="BHF-UCL"/>
</dbReference>
<dbReference type="GO" id="GO:0045944">
    <property type="term" value="P:positive regulation of transcription by RNA polymerase II"/>
    <property type="evidence" value="ECO:0000314"/>
    <property type="project" value="NTNU_SB"/>
</dbReference>
<dbReference type="GO" id="GO:0060261">
    <property type="term" value="P:positive regulation of transcription initiation by RNA polymerase II"/>
    <property type="evidence" value="ECO:0007669"/>
    <property type="project" value="Ensembl"/>
</dbReference>
<dbReference type="GO" id="GO:0016485">
    <property type="term" value="P:protein processing"/>
    <property type="evidence" value="ECO:0007669"/>
    <property type="project" value="Ensembl"/>
</dbReference>
<dbReference type="GO" id="GO:0032986">
    <property type="term" value="P:protein-DNA complex disassembly"/>
    <property type="evidence" value="ECO:0000314"/>
    <property type="project" value="CAFA"/>
</dbReference>
<dbReference type="GO" id="GO:0010564">
    <property type="term" value="P:regulation of cell cycle process"/>
    <property type="evidence" value="ECO:0000314"/>
    <property type="project" value="ComplexPortal"/>
</dbReference>
<dbReference type="GO" id="GO:0010468">
    <property type="term" value="P:regulation of gene expression"/>
    <property type="evidence" value="ECO:0000314"/>
    <property type="project" value="MGI"/>
</dbReference>
<dbReference type="GO" id="GO:1904672">
    <property type="term" value="P:regulation of somatic stem cell population maintenance"/>
    <property type="evidence" value="ECO:0000250"/>
    <property type="project" value="UniProtKB"/>
</dbReference>
<dbReference type="GO" id="GO:0032204">
    <property type="term" value="P:regulation of telomere maintenance"/>
    <property type="evidence" value="ECO:0000315"/>
    <property type="project" value="BHF-UCL"/>
</dbReference>
<dbReference type="GO" id="GO:0006357">
    <property type="term" value="P:regulation of transcription by RNA polymerase II"/>
    <property type="evidence" value="ECO:0000318"/>
    <property type="project" value="GO_Central"/>
</dbReference>
<dbReference type="GO" id="GO:0043279">
    <property type="term" value="P:response to alkaloid"/>
    <property type="evidence" value="ECO:0007669"/>
    <property type="project" value="Ensembl"/>
</dbReference>
<dbReference type="GO" id="GO:0070848">
    <property type="term" value="P:response to growth factor"/>
    <property type="evidence" value="ECO:0000304"/>
    <property type="project" value="UniProtKB"/>
</dbReference>
<dbReference type="GO" id="GO:0009410">
    <property type="term" value="P:response to xenobiotic stimulus"/>
    <property type="evidence" value="ECO:0000270"/>
    <property type="project" value="UniProtKB"/>
</dbReference>
<dbReference type="GO" id="GO:0016072">
    <property type="term" value="P:rRNA metabolic process"/>
    <property type="evidence" value="ECO:0000315"/>
    <property type="project" value="UniProtKB"/>
</dbReference>
<dbReference type="GO" id="GO:0035914">
    <property type="term" value="P:skeletal muscle cell differentiation"/>
    <property type="evidence" value="ECO:0007669"/>
    <property type="project" value="Ensembl"/>
</dbReference>
<dbReference type="GO" id="GO:0048705">
    <property type="term" value="P:skeletal system morphogenesis"/>
    <property type="evidence" value="ECO:0007669"/>
    <property type="project" value="Ensembl"/>
</dbReference>
<dbReference type="GO" id="GO:0006366">
    <property type="term" value="P:transcription by RNA polymerase II"/>
    <property type="evidence" value="ECO:0007669"/>
    <property type="project" value="Ensembl"/>
</dbReference>
<dbReference type="GO" id="GO:0016055">
    <property type="term" value="P:Wnt signaling pathway"/>
    <property type="evidence" value="ECO:0007669"/>
    <property type="project" value="Ensembl"/>
</dbReference>
<dbReference type="CDD" id="cd11458">
    <property type="entry name" value="bHLHzip_c-Myc"/>
    <property type="match status" value="1"/>
</dbReference>
<dbReference type="DisProt" id="DP00260"/>
<dbReference type="FunFam" id="4.10.280.10:FF:000019">
    <property type="entry name" value="Myc proto-oncogene protein"/>
    <property type="match status" value="1"/>
</dbReference>
<dbReference type="Gene3D" id="4.10.280.10">
    <property type="entry name" value="Helix-loop-helix DNA-binding domain"/>
    <property type="match status" value="1"/>
</dbReference>
<dbReference type="IDEAL" id="IID00012"/>
<dbReference type="InterPro" id="IPR011598">
    <property type="entry name" value="bHLH_dom"/>
</dbReference>
<dbReference type="InterPro" id="IPR036638">
    <property type="entry name" value="HLH_DNA-bd_sf"/>
</dbReference>
<dbReference type="InterPro" id="IPR003327">
    <property type="entry name" value="Myc-LZ"/>
</dbReference>
<dbReference type="InterPro" id="IPR050433">
    <property type="entry name" value="Myc_transcription_factors"/>
</dbReference>
<dbReference type="InterPro" id="IPR002418">
    <property type="entry name" value="Tscrpt_reg_Myc"/>
</dbReference>
<dbReference type="InterPro" id="IPR012682">
    <property type="entry name" value="Tscrpt_reg_Myc_N"/>
</dbReference>
<dbReference type="PANTHER" id="PTHR45851">
    <property type="entry name" value="MYC PROTO-ONCOGENE"/>
    <property type="match status" value="1"/>
</dbReference>
<dbReference type="Pfam" id="PF00010">
    <property type="entry name" value="HLH"/>
    <property type="match status" value="1"/>
</dbReference>
<dbReference type="Pfam" id="PF02344">
    <property type="entry name" value="Myc-LZ"/>
    <property type="match status" value="1"/>
</dbReference>
<dbReference type="Pfam" id="PF01056">
    <property type="entry name" value="Myc_N"/>
    <property type="match status" value="1"/>
</dbReference>
<dbReference type="PIRSF" id="PIRSF001705">
    <property type="entry name" value="Myc_protein"/>
    <property type="match status" value="1"/>
</dbReference>
<dbReference type="PRINTS" id="PR00044">
    <property type="entry name" value="LEUZIPPRMYC"/>
</dbReference>
<dbReference type="SMART" id="SM00353">
    <property type="entry name" value="HLH"/>
    <property type="match status" value="1"/>
</dbReference>
<dbReference type="SUPFAM" id="SSF47459">
    <property type="entry name" value="HLH, helix-loop-helix DNA-binding domain"/>
    <property type="match status" value="1"/>
</dbReference>
<dbReference type="PROSITE" id="PS50888">
    <property type="entry name" value="BHLH"/>
    <property type="match status" value="1"/>
</dbReference>
<accession>P01106</accession>
<accession>A0A024R9L7</accession>
<accession>A0A087WUS5</accession>
<accession>A8WFE7</accession>
<accession>H0YBT0</accession>
<accession>P01107</accession>
<accession>Q14026</accession>
<sequence length="454" mass="50565">MDFFRVVENQQPPATMPLNVSFTNRNYDLDYDSVQPYFYCDEEENFYQQQQQSELQPPAPSEDIWKKFELLPTPPLSPSRRSGLCSPSYVAVTPFSLRGDNDGGGGSFSTADQLEMVTELLGGDMVNQSFICDPDDETFIKNIIIQDCMWSGFSAAAKLVSEKLASYQAARKDSGSPNPARGHSVCSTSSLYLQDLSAAASECIDPSVVFPYPLNDSSSPKSCASQDSSAFSPSSDSLLSSTESSPQGSPEPLVLHEETPPTTSSDSEEEQEDEEEIDVVSVEKRQAPGKRSESGSPSAGGHSKPPHSPLVLKRCHVSTHQHNYAAPPSTRKDYPAAKRVKLDSVRVLRQISNNRKCTSPRSSDTEENVKRRTHNVLERQRRNELKRSFFALRDQIPELENNEKAPKVVILKKATAYILSVQAEEQKLISEEDLLRKRREQLKHKLEQLRNSCA</sequence>
<evidence type="ECO:0000250" key="1">
    <source>
        <dbReference type="UniProtKB" id="P01108"/>
    </source>
</evidence>
<evidence type="ECO:0000255" key="2">
    <source>
        <dbReference type="PROSITE-ProRule" id="PRU00981"/>
    </source>
</evidence>
<evidence type="ECO:0000256" key="3">
    <source>
        <dbReference type="SAM" id="MobiDB-lite"/>
    </source>
</evidence>
<evidence type="ECO:0000269" key="4">
    <source>
    </source>
</evidence>
<evidence type="ECO:0000269" key="5">
    <source>
    </source>
</evidence>
<evidence type="ECO:0000269" key="6">
    <source>
    </source>
</evidence>
<evidence type="ECO:0000269" key="7">
    <source>
    </source>
</evidence>
<evidence type="ECO:0000269" key="8">
    <source>
    </source>
</evidence>
<evidence type="ECO:0000269" key="9">
    <source>
    </source>
</evidence>
<evidence type="ECO:0000269" key="10">
    <source>
    </source>
</evidence>
<evidence type="ECO:0000269" key="11">
    <source>
    </source>
</evidence>
<evidence type="ECO:0000269" key="12">
    <source>
    </source>
</evidence>
<evidence type="ECO:0000269" key="13">
    <source>
    </source>
</evidence>
<evidence type="ECO:0000269" key="14">
    <source>
    </source>
</evidence>
<evidence type="ECO:0000269" key="15">
    <source>
    </source>
</evidence>
<evidence type="ECO:0000269" key="16">
    <source>
    </source>
</evidence>
<evidence type="ECO:0000269" key="17">
    <source>
    </source>
</evidence>
<evidence type="ECO:0000269" key="18">
    <source>
    </source>
</evidence>
<evidence type="ECO:0000269" key="19">
    <source>
    </source>
</evidence>
<evidence type="ECO:0000269" key="20">
    <source>
    </source>
</evidence>
<evidence type="ECO:0000269" key="21">
    <source>
    </source>
</evidence>
<evidence type="ECO:0000269" key="22">
    <source>
    </source>
</evidence>
<evidence type="ECO:0000269" key="23">
    <source>
    </source>
</evidence>
<evidence type="ECO:0000269" key="24">
    <source>
    </source>
</evidence>
<evidence type="ECO:0000269" key="25">
    <source>
    </source>
</evidence>
<evidence type="ECO:0000269" key="26">
    <source>
    </source>
</evidence>
<evidence type="ECO:0000269" key="27">
    <source>
    </source>
</evidence>
<evidence type="ECO:0000269" key="28">
    <source>
    </source>
</evidence>
<evidence type="ECO:0000269" key="29">
    <source>
    </source>
</evidence>
<evidence type="ECO:0000269" key="30">
    <source>
    </source>
</evidence>
<evidence type="ECO:0000269" key="31">
    <source>
    </source>
</evidence>
<evidence type="ECO:0000269" key="32">
    <source>
    </source>
</evidence>
<evidence type="ECO:0000269" key="33">
    <source>
    </source>
</evidence>
<evidence type="ECO:0000269" key="34">
    <source>
    </source>
</evidence>
<evidence type="ECO:0000269" key="35">
    <source>
    </source>
</evidence>
<evidence type="ECO:0000269" key="36">
    <source>
    </source>
</evidence>
<evidence type="ECO:0000269" key="37">
    <source>
    </source>
</evidence>
<evidence type="ECO:0000269" key="38">
    <source>
    </source>
</evidence>
<evidence type="ECO:0000269" key="39">
    <source>
    </source>
</evidence>
<evidence type="ECO:0000269" key="40">
    <source ref="11"/>
</evidence>
<evidence type="ECO:0000303" key="41">
    <source>
    </source>
</evidence>
<evidence type="ECO:0000305" key="42"/>
<evidence type="ECO:0000305" key="43">
    <source>
    </source>
</evidence>
<evidence type="ECO:0007744" key="44">
    <source>
    </source>
</evidence>
<evidence type="ECO:0007744" key="45">
    <source>
    </source>
</evidence>
<evidence type="ECO:0007744" key="46">
    <source>
    </source>
</evidence>
<evidence type="ECO:0007744" key="47">
    <source>
    </source>
</evidence>
<evidence type="ECO:0007744" key="48">
    <source>
    </source>
</evidence>
<evidence type="ECO:0007744" key="49">
    <source>
    </source>
</evidence>
<evidence type="ECO:0007744" key="50">
    <source>
    </source>
</evidence>
<evidence type="ECO:0007829" key="51">
    <source>
        <dbReference type="PDB" id="6E16"/>
    </source>
</evidence>
<evidence type="ECO:0007829" key="52">
    <source>
        <dbReference type="PDB" id="6G6K"/>
    </source>
</evidence>